<reference key="1">
    <citation type="journal article" date="1992" name="EMBO J.">
        <title>A family of Drosophila serotonin receptors with distinct intracellular signalling properties and expression patterns.</title>
        <authorList>
            <person name="Saudou F."/>
            <person name="Boschert U."/>
            <person name="Amlaiky N."/>
            <person name="Plassat J.-L."/>
            <person name="Hen R."/>
        </authorList>
    </citation>
    <scope>NUCLEOTIDE SEQUENCE [MRNA]</scope>
    <scope>VARIANT VAL-61</scope>
    <source>
        <strain>Oregon-R</strain>
        <tissue>Head</tissue>
    </source>
</reference>
<reference key="2">
    <citation type="journal article" date="2000" name="Science">
        <title>The genome sequence of Drosophila melanogaster.</title>
        <authorList>
            <person name="Adams M.D."/>
            <person name="Celniker S.E."/>
            <person name="Holt R.A."/>
            <person name="Evans C.A."/>
            <person name="Gocayne J.D."/>
            <person name="Amanatides P.G."/>
            <person name="Scherer S.E."/>
            <person name="Li P.W."/>
            <person name="Hoskins R.A."/>
            <person name="Galle R.F."/>
            <person name="George R.A."/>
            <person name="Lewis S.E."/>
            <person name="Richards S."/>
            <person name="Ashburner M."/>
            <person name="Henderson S.N."/>
            <person name="Sutton G.G."/>
            <person name="Wortman J.R."/>
            <person name="Yandell M.D."/>
            <person name="Zhang Q."/>
            <person name="Chen L.X."/>
            <person name="Brandon R.C."/>
            <person name="Rogers Y.-H.C."/>
            <person name="Blazej R.G."/>
            <person name="Champe M."/>
            <person name="Pfeiffer B.D."/>
            <person name="Wan K.H."/>
            <person name="Doyle C."/>
            <person name="Baxter E.G."/>
            <person name="Helt G."/>
            <person name="Nelson C.R."/>
            <person name="Miklos G.L.G."/>
            <person name="Abril J.F."/>
            <person name="Agbayani A."/>
            <person name="An H.-J."/>
            <person name="Andrews-Pfannkoch C."/>
            <person name="Baldwin D."/>
            <person name="Ballew R.M."/>
            <person name="Basu A."/>
            <person name="Baxendale J."/>
            <person name="Bayraktaroglu L."/>
            <person name="Beasley E.M."/>
            <person name="Beeson K.Y."/>
            <person name="Benos P.V."/>
            <person name="Berman B.P."/>
            <person name="Bhandari D."/>
            <person name="Bolshakov S."/>
            <person name="Borkova D."/>
            <person name="Botchan M.R."/>
            <person name="Bouck J."/>
            <person name="Brokstein P."/>
            <person name="Brottier P."/>
            <person name="Burtis K.C."/>
            <person name="Busam D.A."/>
            <person name="Butler H."/>
            <person name="Cadieu E."/>
            <person name="Center A."/>
            <person name="Chandra I."/>
            <person name="Cherry J.M."/>
            <person name="Cawley S."/>
            <person name="Dahlke C."/>
            <person name="Davenport L.B."/>
            <person name="Davies P."/>
            <person name="de Pablos B."/>
            <person name="Delcher A."/>
            <person name="Deng Z."/>
            <person name="Mays A.D."/>
            <person name="Dew I."/>
            <person name="Dietz S.M."/>
            <person name="Dodson K."/>
            <person name="Doup L.E."/>
            <person name="Downes M."/>
            <person name="Dugan-Rocha S."/>
            <person name="Dunkov B.C."/>
            <person name="Dunn P."/>
            <person name="Durbin K.J."/>
            <person name="Evangelista C.C."/>
            <person name="Ferraz C."/>
            <person name="Ferriera S."/>
            <person name="Fleischmann W."/>
            <person name="Fosler C."/>
            <person name="Gabrielian A.E."/>
            <person name="Garg N.S."/>
            <person name="Gelbart W.M."/>
            <person name="Glasser K."/>
            <person name="Glodek A."/>
            <person name="Gong F."/>
            <person name="Gorrell J.H."/>
            <person name="Gu Z."/>
            <person name="Guan P."/>
            <person name="Harris M."/>
            <person name="Harris N.L."/>
            <person name="Harvey D.A."/>
            <person name="Heiman T.J."/>
            <person name="Hernandez J.R."/>
            <person name="Houck J."/>
            <person name="Hostin D."/>
            <person name="Houston K.A."/>
            <person name="Howland T.J."/>
            <person name="Wei M.-H."/>
            <person name="Ibegwam C."/>
            <person name="Jalali M."/>
            <person name="Kalush F."/>
            <person name="Karpen G.H."/>
            <person name="Ke Z."/>
            <person name="Kennison J.A."/>
            <person name="Ketchum K.A."/>
            <person name="Kimmel B.E."/>
            <person name="Kodira C.D."/>
            <person name="Kraft C.L."/>
            <person name="Kravitz S."/>
            <person name="Kulp D."/>
            <person name="Lai Z."/>
            <person name="Lasko P."/>
            <person name="Lei Y."/>
            <person name="Levitsky A.A."/>
            <person name="Li J.H."/>
            <person name="Li Z."/>
            <person name="Liang Y."/>
            <person name="Lin X."/>
            <person name="Liu X."/>
            <person name="Mattei B."/>
            <person name="McIntosh T.C."/>
            <person name="McLeod M.P."/>
            <person name="McPherson D."/>
            <person name="Merkulov G."/>
            <person name="Milshina N.V."/>
            <person name="Mobarry C."/>
            <person name="Morris J."/>
            <person name="Moshrefi A."/>
            <person name="Mount S.M."/>
            <person name="Moy M."/>
            <person name="Murphy B."/>
            <person name="Murphy L."/>
            <person name="Muzny D.M."/>
            <person name="Nelson D.L."/>
            <person name="Nelson D.R."/>
            <person name="Nelson K.A."/>
            <person name="Nixon K."/>
            <person name="Nusskern D.R."/>
            <person name="Pacleb J.M."/>
            <person name="Palazzolo M."/>
            <person name="Pittman G.S."/>
            <person name="Pan S."/>
            <person name="Pollard J."/>
            <person name="Puri V."/>
            <person name="Reese M.G."/>
            <person name="Reinert K."/>
            <person name="Remington K."/>
            <person name="Saunders R.D.C."/>
            <person name="Scheeler F."/>
            <person name="Shen H."/>
            <person name="Shue B.C."/>
            <person name="Siden-Kiamos I."/>
            <person name="Simpson M."/>
            <person name="Skupski M.P."/>
            <person name="Smith T.J."/>
            <person name="Spier E."/>
            <person name="Spradling A.C."/>
            <person name="Stapleton M."/>
            <person name="Strong R."/>
            <person name="Sun E."/>
            <person name="Svirskas R."/>
            <person name="Tector C."/>
            <person name="Turner R."/>
            <person name="Venter E."/>
            <person name="Wang A.H."/>
            <person name="Wang X."/>
            <person name="Wang Z.-Y."/>
            <person name="Wassarman D.A."/>
            <person name="Weinstock G.M."/>
            <person name="Weissenbach J."/>
            <person name="Williams S.M."/>
            <person name="Woodage T."/>
            <person name="Worley K.C."/>
            <person name="Wu D."/>
            <person name="Yang S."/>
            <person name="Yao Q.A."/>
            <person name="Ye J."/>
            <person name="Yeh R.-F."/>
            <person name="Zaveri J.S."/>
            <person name="Zhan M."/>
            <person name="Zhang G."/>
            <person name="Zhao Q."/>
            <person name="Zheng L."/>
            <person name="Zheng X.H."/>
            <person name="Zhong F.N."/>
            <person name="Zhong W."/>
            <person name="Zhou X."/>
            <person name="Zhu S.C."/>
            <person name="Zhu X."/>
            <person name="Smith H.O."/>
            <person name="Gibbs R.A."/>
            <person name="Myers E.W."/>
            <person name="Rubin G.M."/>
            <person name="Venter J.C."/>
        </authorList>
    </citation>
    <scope>NUCLEOTIDE SEQUENCE [LARGE SCALE GENOMIC DNA]</scope>
    <source>
        <strain>Berkeley</strain>
    </source>
</reference>
<reference key="3">
    <citation type="journal article" date="2002" name="Genome Biol.">
        <title>Annotation of the Drosophila melanogaster euchromatic genome: a systematic review.</title>
        <authorList>
            <person name="Misra S."/>
            <person name="Crosby M.A."/>
            <person name="Mungall C.J."/>
            <person name="Matthews B.B."/>
            <person name="Campbell K.S."/>
            <person name="Hradecky P."/>
            <person name="Huang Y."/>
            <person name="Kaminker J.S."/>
            <person name="Millburn G.H."/>
            <person name="Prochnik S.E."/>
            <person name="Smith C.D."/>
            <person name="Tupy J.L."/>
            <person name="Whitfield E.J."/>
            <person name="Bayraktaroglu L."/>
            <person name="Berman B.P."/>
            <person name="Bettencourt B.R."/>
            <person name="Celniker S.E."/>
            <person name="de Grey A.D.N.J."/>
            <person name="Drysdale R.A."/>
            <person name="Harris N.L."/>
            <person name="Richter J."/>
            <person name="Russo S."/>
            <person name="Schroeder A.J."/>
            <person name="Shu S.Q."/>
            <person name="Stapleton M."/>
            <person name="Yamada C."/>
            <person name="Ashburner M."/>
            <person name="Gelbart W.M."/>
            <person name="Rubin G.M."/>
            <person name="Lewis S.E."/>
        </authorList>
    </citation>
    <scope>GENOME REANNOTATION</scope>
    <source>
        <strain>Berkeley</strain>
    </source>
</reference>
<reference key="4">
    <citation type="submission" date="2009-03" db="EMBL/GenBank/DDBJ databases">
        <authorList>
            <person name="Stapleton M."/>
            <person name="Carlson J.W."/>
            <person name="Booth B."/>
            <person name="Frise E."/>
            <person name="Kapadia B."/>
            <person name="Park S."/>
            <person name="Wan K.H."/>
            <person name="Yu C."/>
            <person name="Celniker S.E."/>
        </authorList>
    </citation>
    <scope>NUCLEOTIDE SEQUENCE [LARGE SCALE MRNA]</scope>
    <source>
        <strain>Berkeley</strain>
    </source>
</reference>
<reference key="5">
    <citation type="journal article" date="2004" name="Genetics">
        <title>Effects of population structure and sex on association between serotonin receptors and Drosophila heart rate.</title>
        <authorList>
            <person name="Nikoh N."/>
            <person name="Duty A."/>
            <person name="Gibson G."/>
        </authorList>
    </citation>
    <scope>NUCLEOTIDE SEQUENCE [GENOMIC DNA] OF 1-107 AND 152-617</scope>
    <scope>VARIANTS VAL-14; ARG-40; VAL-61; LYS-76; TRP-79; ILE-90; GLU-301; HIS-309; GLY-310; ILE-460; SER-463; 478-ALA--GLY-481 DEL AND VAL-492</scope>
    <source>
        <strain>CA-001</strain>
        <strain>CA-002</strain>
        <strain>CA-003</strain>
        <strain>CA-008</strain>
        <strain>CA-009</strain>
        <strain>CA-010</strain>
        <strain>CA-011</strain>
        <strain>CA-012</strain>
        <strain>CA-013</strain>
        <strain>CA-015</strain>
        <strain>CA-017</strain>
        <strain>CA-018</strain>
        <strain>CA-023</strain>
        <strain>CA-026</strain>
        <strain>CA-027</strain>
        <strain>CA-030</strain>
        <strain>CA-031</strain>
        <strain>CA-033</strain>
        <strain>CA-034</strain>
        <strain>CA-035</strain>
        <strain>CA-037</strain>
        <strain>CA-040</strain>
        <strain>CA-041</strain>
        <strain>CA-043</strain>
        <strain>CA-044</strain>
        <strain>CA-045</strain>
        <strain>CA-046</strain>
        <strain>CA-047</strain>
        <strain>CA-048</strain>
        <strain>CA-052</strain>
        <strain>CA-055</strain>
        <strain>CA-056</strain>
        <strain>CA-057</strain>
        <strain>CA-058</strain>
        <strain>CA-060</strain>
        <strain>CA-061</strain>
        <strain>CA-062</strain>
        <strain>CA-063</strain>
        <strain>CA-064</strain>
        <strain>CA-065</strain>
        <strain>CA-066</strain>
        <strain>CA-068</strain>
        <strain>CA-069</strain>
        <strain>CA-070</strain>
        <strain>CA-072</strain>
        <strain>CA-075</strain>
        <strain>CA-081</strain>
        <strain>CA-086</strain>
        <strain>CA-087</strain>
        <strain>CA-088</strain>
        <strain>CA-089</strain>
        <strain>CA-090</strain>
        <strain>CA-091</strain>
        <strain>CA-093</strain>
        <strain>CA-095</strain>
        <strain>CA-096</strain>
        <strain>CA-098</strain>
        <strain>CA-100</strain>
        <strain>CA-105</strain>
        <strain>CA-113</strain>
        <strain>CA-114</strain>
        <strain>CA-115</strain>
        <strain>CA-118</strain>
        <strain>CA-120</strain>
        <strain>CA-123</strain>
        <strain>CA-126</strain>
        <strain>CA-127</strain>
        <strain>CA-128</strain>
        <strain>CA-129</strain>
        <strain>CA-130</strain>
        <strain>CA-132</strain>
        <strain>CA-133</strain>
        <strain>CA-136</strain>
        <strain>CA-137</strain>
        <strain>CA-140</strain>
        <strain>CA-142</strain>
        <strain>CA-144</strain>
        <strain>CA-145</strain>
        <strain>CA-147</strain>
        <strain>CA-148</strain>
        <strain>NC-001</strain>
        <strain>NC-002</strain>
        <strain>NC-003</strain>
        <strain>NC-004</strain>
        <strain>NC-005</strain>
        <strain>NC-006</strain>
        <strain>NC-008</strain>
        <strain>NC-010</strain>
        <strain>NC-011</strain>
        <strain>NC-012</strain>
        <strain>NC-013</strain>
        <strain>NC-014</strain>
        <strain>NC-015</strain>
        <strain>NC-017</strain>
        <strain>NC-018</strain>
        <strain>NC-021</strain>
        <strain>NC-022</strain>
        <strain>NC-023</strain>
        <strain>NC-024</strain>
        <strain>NC-025</strain>
        <strain>NC-026</strain>
        <strain>NC-027</strain>
        <strain>NC-028</strain>
        <strain>NC-029</strain>
        <strain>NC-030</strain>
        <strain>NC-031</strain>
        <strain>NC-032</strain>
        <strain>NC-033</strain>
        <strain>NC-034</strain>
        <strain>NC-036</strain>
        <strain>NC-037</strain>
        <strain>NC-038</strain>
        <strain>NC-039</strain>
        <strain>NC-040</strain>
        <strain>NC-041</strain>
        <strain>NC-042</strain>
        <strain>NC-043</strain>
        <strain>NC-044</strain>
        <strain>NC-046</strain>
        <strain>NC-047</strain>
        <strain>NC-048</strain>
        <strain>NC-049</strain>
        <strain>NC-050</strain>
        <strain>NC-051</strain>
        <strain>NC-052</strain>
        <strain>NC-053</strain>
        <strain>NC-054</strain>
        <strain>NC-057</strain>
        <strain>NC-058</strain>
        <strain>NC-059</strain>
        <strain>NC-060</strain>
        <strain>NC-061</strain>
        <strain>NC-062</strain>
        <strain>NC-064</strain>
        <strain>NC-066</strain>
        <strain>NC-067</strain>
        <strain>NC-068</strain>
        <strain>NC-069</strain>
        <strain>NC-070</strain>
        <strain>NC-071</strain>
        <strain>NC-072</strain>
        <strain>NC-073</strain>
        <strain>NC-074</strain>
        <strain>NC-075</strain>
        <strain>NC-077</strain>
        <strain>NC-079</strain>
        <strain>NC-080</strain>
        <strain>NC-081</strain>
        <strain>NC-084</strain>
        <strain>NC-086</strain>
        <strain>NC-087</strain>
        <strain>NC-088</strain>
        <strain>NC-089</strain>
        <strain>NC-091</strain>
        <strain>NC-092</strain>
        <strain>NC-094</strain>
        <strain>NC-095</strain>
        <strain>NC-096</strain>
        <strain>NC-097</strain>
        <strain>NC-098</strain>
        <strain>NC-100</strain>
        <strain>NC-101</strain>
        <strain>NC-103</strain>
        <strain>NC-104</strain>
        <strain>NC-105</strain>
        <strain>NC-107</strain>
        <strain>NC-108</strain>
        <strain>NC-109</strain>
        <strain>NC-110</strain>
        <strain>NC-111</strain>
        <strain>NC-112</strain>
        <strain>NC-113</strain>
        <strain>NC-114</strain>
        <strain>NC-115</strain>
        <strain>NC-116</strain>
        <strain>NC-118</strain>
        <strain>NC-119</strain>
        <strain>NC-121</strain>
        <strain>NC-123</strain>
        <strain>NC-124</strain>
        <strain>NC-125</strain>
        <strain>NC-126</strain>
        <strain>NC-127</strain>
        <strain>NC-128</strain>
        <strain>NC-129</strain>
        <strain>NC-131</strain>
        <strain>NC-133</strain>
        <strain>NC-134</strain>
        <strain>NC-135</strain>
        <strain>NC-136</strain>
        <strain>NC-137</strain>
        <strain>NC-138</strain>
        <strain>NC-139</strain>
        <strain>NC-141</strain>
        <strain>NC-142</strain>
        <strain>NC-144</strain>
        <strain>NC-146</strain>
        <strain>NC-147</strain>
        <strain>NC-148</strain>
        <strain>NC-149</strain>
        <strain>NC-150</strain>
    </source>
</reference>
<sequence>MLKTVTTAMAAGDDDVPASILEIELPAILLNESLFIELNGNLTQLVDTTSNLSQIVWNRSINGNGNSNTFDLVDDEQERAAVEFWLLVKMIAMAVVLGLMILVTIIGNVFVIAAIILERNLQNVANYLVASLAVADLFVACLVMPLGAVYEISNGWILGPELCDIWTSCDVLCCTASILHLVAIAADRYWTVTNIDYNNLRTPRRVFLMIFCVWFAALIVSLAPQFGWKDPDYMKRIEEQHCMVSQDVGYQIFATCCTFYVPLLVILFLYWKIYIIARKRIQRRAQKSFNVTLTETDCDSAVRELKKERSKRRAERKRLEAGERTPVDGDGTGGQLQRRTRKRMRICFGRNTNTANVVAGSEGAVARSMAAIAVDFASLAITREETEFSTSNYDNKSHAGTELTTVSSDADDYRTSNANEIITLSQQVAHATQHHLIASHLNAITPLAQSIAMGGVGCLTTTTPSEKALSGAGTVAGAVAGGSGSGSGEEGAGTEGKNAGVGLGGVLASIANPHQKLAKRRQLLEAKRERKAAQTLAIITGAFVICWLPFFVMALTMSLCKECEIHTAVASLFLWLGYFNSTLNPVIYTIFNPEFRRAFKRILFGRKAAARARSAKI</sequence>
<protein>
    <recommendedName>
        <fullName>5-hydroxytryptamine receptor 2B</fullName>
        <shortName>5-HT receptor 2B</shortName>
    </recommendedName>
    <alternativeName>
        <fullName>5-hydroxytryptamine receptor 1B</fullName>
        <shortName>5-HT receptor 1B</shortName>
    </alternativeName>
    <alternativeName>
        <fullName>Serotonin receptor 1B</fullName>
    </alternativeName>
    <alternativeName>
        <fullName>Serotonin receptor 2B</fullName>
    </alternativeName>
</protein>
<gene>
    <name type="primary">5-HT1B</name>
    <name type="synonym">5HT-R2B</name>
    <name type="ORF">CG15113</name>
</gene>
<evidence type="ECO:0000250" key="1"/>
<evidence type="ECO:0000255" key="2"/>
<evidence type="ECO:0000255" key="3">
    <source>
        <dbReference type="PROSITE-ProRule" id="PRU00521"/>
    </source>
</evidence>
<evidence type="ECO:0000256" key="4">
    <source>
        <dbReference type="SAM" id="MobiDB-lite"/>
    </source>
</evidence>
<evidence type="ECO:0000269" key="5">
    <source>
    </source>
</evidence>
<evidence type="ECO:0000269" key="6">
    <source>
    </source>
</evidence>
<evidence type="ECO:0000305" key="7"/>
<comment type="function">
    <text>This is one of the several different receptors for 5-hydroxytryptamine (serotonin), a biogenic hormone that functions as a neurotransmitter, a hormone, and a mitogen. The activity of this receptor is mediated by G proteins which inhibit adenylate cyclase.</text>
</comment>
<comment type="subcellular location">
    <subcellularLocation>
        <location>Cell membrane</location>
        <topology>Multi-pass membrane protein</topology>
    </subcellularLocation>
</comment>
<comment type="similarity">
    <text evidence="3">Belongs to the G-protein coupled receptor 1 family.</text>
</comment>
<comment type="sequence caution" evidence="7">
    <conflict type="erroneous gene model prediction">
        <sequence resource="EMBL-CDS" id="AAS74713"/>
    </conflict>
</comment>
<comment type="sequence caution" evidence="7">
    <conflict type="miscellaneous discrepancy">
        <sequence resource="EMBL-CDS" id="ABV82206"/>
    </conflict>
</comment>
<comment type="sequence caution" evidence="7">
    <conflict type="erroneous gene model prediction">
        <sequence resource="EMBL-CDS" id="ACL83162"/>
    </conflict>
    <text>Stop codon readthrough.</text>
</comment>
<comment type="sequence caution" evidence="7">
    <conflict type="erroneous initiation">
        <sequence resource="EMBL-CDS" id="CAA77571"/>
    </conflict>
    <text>Extended N-terminus.</text>
</comment>
<name>5HT2B_DROME</name>
<proteinExistence type="evidence at transcript level"/>
<keyword id="KW-1003">Cell membrane</keyword>
<keyword id="KW-1015">Disulfide bond</keyword>
<keyword id="KW-0297">G-protein coupled receptor</keyword>
<keyword id="KW-0325">Glycoprotein</keyword>
<keyword id="KW-0472">Membrane</keyword>
<keyword id="KW-0675">Receptor</keyword>
<keyword id="KW-1185">Reference proteome</keyword>
<keyword id="KW-0807">Transducer</keyword>
<keyword id="KW-0812">Transmembrane</keyword>
<keyword id="KW-1133">Transmembrane helix</keyword>
<accession>P28286</accession>
<accession>A8E6N2</accession>
<accession>B7YZK9</accession>
<accession>C0PV72</accession>
<accession>Q059D0</accession>
<accession>Q5MRS0</accession>
<accession>Q5MRY0</accession>
<accession>Q5MS20</accession>
<accession>Q5MS32</accession>
<accession>Q5MS65</accession>
<accession>Q5MS79</accession>
<accession>Q5MS95</accession>
<accession>Q5MSA8</accession>
<accession>Q5MSB9</accession>
<accession>Q5MSC3</accession>
<accession>Q5MSC5</accession>
<accession>Q5MSC6</accession>
<accession>Q5MSD0</accession>
<accession>Q5MSD8</accession>
<accession>Q5MSE2</accession>
<accession>Q5MSF4</accession>
<accession>Q5MSG4</accession>
<accession>Q5MSH7</accession>
<accession>Q5MSV8</accession>
<accession>Q5MSW1</accession>
<accession>Q5MSW3</accession>
<accession>Q5MSX1</accession>
<accession>Q5MSX4</accession>
<accession>Q5MSX6</accession>
<accession>Q5MSX8</accession>
<accession>Q5MSY0</accession>
<accession>Q5MSY1</accession>
<accession>Q5MSY6</accession>
<accession>Q5MSY7</accession>
<accession>Q5MSZ2</accession>
<accession>Q5MSZ3</accession>
<accession>Q5MSZ4</accession>
<accession>Q5MSZ6</accession>
<accession>Q5MSZ7</accession>
<accession>Q5MT00</accession>
<accession>Q5MT01</accession>
<accession>Q5MT02</accession>
<accession>Q5MT07</accession>
<accession>Q5MT08</accession>
<accession>Q5MT10</accession>
<accession>Q5MT11</accession>
<accession>Q5MT12</accession>
<accession>Q5MT24</accession>
<accession>Q5MT25</accession>
<accession>Q5MT26</accession>
<accession>Q5MT27</accession>
<accession>Q5MT32</accession>
<accession>Q5MT34</accession>
<accession>Q5MT37</accession>
<accession>Q5MT38</accession>
<accession>Q5MT48</accession>
<accession>Q5MT57</accession>
<accession>Q5MT58</accession>
<accession>Q5MT65</accession>
<accession>Q5MT69</accession>
<accession>Q5MT71</accession>
<accession>Q5MT78</accession>
<accession>Q5MTA0</accession>
<accession>Q5MTC0</accession>
<accession>Q5MTC7</accession>
<accession>Q5MTD4</accession>
<accession>Q5MTE0</accession>
<accession>Q5MTE1</accession>
<accession>Q5MTE2</accession>
<accession>Q5MTE5</accession>
<accession>Q5MTE8</accession>
<accession>Q9V8Q3</accession>
<dbReference type="EMBL" id="Z11490">
    <property type="protein sequence ID" value="CAA77571.1"/>
    <property type="status" value="ALT_SEQ"/>
    <property type="molecule type" value="mRNA"/>
</dbReference>
<dbReference type="EMBL" id="AE013599">
    <property type="protein sequence ID" value="AAF57610.4"/>
    <property type="molecule type" value="Genomic_DNA"/>
</dbReference>
<dbReference type="EMBL" id="AE013599">
    <property type="protein sequence ID" value="ACL83162.2"/>
    <property type="status" value="ALT_SEQ"/>
    <property type="molecule type" value="Genomic_DNA"/>
</dbReference>
<dbReference type="EMBL" id="BT029038">
    <property type="protein sequence ID" value="ABJ16971.1"/>
    <property type="molecule type" value="mRNA"/>
</dbReference>
<dbReference type="EMBL" id="BT030824">
    <property type="protein sequence ID" value="ABV82206.1"/>
    <property type="status" value="ALT_SEQ"/>
    <property type="molecule type" value="mRNA"/>
</dbReference>
<dbReference type="EMBL" id="BT072928">
    <property type="protein sequence ID" value="ACN86076.1"/>
    <property type="molecule type" value="mRNA"/>
</dbReference>
<dbReference type="EMBL" id="AY565369">
    <property type="protein sequence ID" value="AAS74379.1"/>
    <property type="molecule type" value="Genomic_DNA"/>
</dbReference>
<dbReference type="EMBL" id="AY565370">
    <property type="protein sequence ID" value="AAS74380.1"/>
    <property type="molecule type" value="Genomic_DNA"/>
</dbReference>
<dbReference type="EMBL" id="AY565371">
    <property type="protein sequence ID" value="AAS74381.1"/>
    <property type="molecule type" value="Genomic_DNA"/>
</dbReference>
<dbReference type="EMBL" id="AY565372">
    <property type="protein sequence ID" value="AAS74382.1"/>
    <property type="molecule type" value="Genomic_DNA"/>
</dbReference>
<dbReference type="EMBL" id="AY565373">
    <property type="protein sequence ID" value="AAS74383.1"/>
    <property type="molecule type" value="Genomic_DNA"/>
</dbReference>
<dbReference type="EMBL" id="AY565374">
    <property type="protein sequence ID" value="AAS74384.1"/>
    <property type="molecule type" value="Genomic_DNA"/>
</dbReference>
<dbReference type="EMBL" id="AY565375">
    <property type="protein sequence ID" value="AAS74385.1"/>
    <property type="molecule type" value="Genomic_DNA"/>
</dbReference>
<dbReference type="EMBL" id="AY565376">
    <property type="protein sequence ID" value="AAS74386.1"/>
    <property type="molecule type" value="Genomic_DNA"/>
</dbReference>
<dbReference type="EMBL" id="AY565377">
    <property type="protein sequence ID" value="AAS74387.1"/>
    <property type="molecule type" value="Genomic_DNA"/>
</dbReference>
<dbReference type="EMBL" id="AY565378">
    <property type="protein sequence ID" value="AAS74388.1"/>
    <property type="molecule type" value="Genomic_DNA"/>
</dbReference>
<dbReference type="EMBL" id="AY565379">
    <property type="protein sequence ID" value="AAS74389.1"/>
    <property type="molecule type" value="Genomic_DNA"/>
</dbReference>
<dbReference type="EMBL" id="AY565380">
    <property type="protein sequence ID" value="AAS74390.1"/>
    <property type="molecule type" value="Genomic_DNA"/>
</dbReference>
<dbReference type="EMBL" id="AY565381">
    <property type="protein sequence ID" value="AAS74391.1"/>
    <property type="molecule type" value="Genomic_DNA"/>
</dbReference>
<dbReference type="EMBL" id="AY565382">
    <property type="protein sequence ID" value="AAS74392.1"/>
    <property type="molecule type" value="Genomic_DNA"/>
</dbReference>
<dbReference type="EMBL" id="AY565383">
    <property type="protein sequence ID" value="AAS74393.1"/>
    <property type="molecule type" value="Genomic_DNA"/>
</dbReference>
<dbReference type="EMBL" id="AY565384">
    <property type="protein sequence ID" value="AAS74394.1"/>
    <property type="molecule type" value="Genomic_DNA"/>
</dbReference>
<dbReference type="EMBL" id="AY565385">
    <property type="protein sequence ID" value="AAS74395.1"/>
    <property type="molecule type" value="Genomic_DNA"/>
</dbReference>
<dbReference type="EMBL" id="AY565386">
    <property type="protein sequence ID" value="AAS74396.1"/>
    <property type="molecule type" value="Genomic_DNA"/>
</dbReference>
<dbReference type="EMBL" id="AY565387">
    <property type="protein sequence ID" value="AAS74397.1"/>
    <property type="molecule type" value="Genomic_DNA"/>
</dbReference>
<dbReference type="EMBL" id="AY565388">
    <property type="protein sequence ID" value="AAS74398.1"/>
    <property type="molecule type" value="Genomic_DNA"/>
</dbReference>
<dbReference type="EMBL" id="AY565389">
    <property type="protein sequence ID" value="AAS74399.1"/>
    <property type="molecule type" value="Genomic_DNA"/>
</dbReference>
<dbReference type="EMBL" id="AY565390">
    <property type="protein sequence ID" value="AAS74400.1"/>
    <property type="molecule type" value="Genomic_DNA"/>
</dbReference>
<dbReference type="EMBL" id="AY565391">
    <property type="protein sequence ID" value="AAS74401.1"/>
    <property type="molecule type" value="Genomic_DNA"/>
</dbReference>
<dbReference type="EMBL" id="AY565392">
    <property type="protein sequence ID" value="AAS74402.1"/>
    <property type="molecule type" value="Genomic_DNA"/>
</dbReference>
<dbReference type="EMBL" id="AY565393">
    <property type="protein sequence ID" value="AAS74403.1"/>
    <property type="molecule type" value="Genomic_DNA"/>
</dbReference>
<dbReference type="EMBL" id="AY565394">
    <property type="protein sequence ID" value="AAS74404.1"/>
    <property type="molecule type" value="Genomic_DNA"/>
</dbReference>
<dbReference type="EMBL" id="AY565395">
    <property type="protein sequence ID" value="AAS74405.1"/>
    <property type="molecule type" value="Genomic_DNA"/>
</dbReference>
<dbReference type="EMBL" id="AY565396">
    <property type="protein sequence ID" value="AAS74406.1"/>
    <property type="molecule type" value="Genomic_DNA"/>
</dbReference>
<dbReference type="EMBL" id="AY565397">
    <property type="protein sequence ID" value="AAS74407.1"/>
    <property type="molecule type" value="Genomic_DNA"/>
</dbReference>
<dbReference type="EMBL" id="AY565398">
    <property type="protein sequence ID" value="AAS74408.1"/>
    <property type="molecule type" value="Genomic_DNA"/>
</dbReference>
<dbReference type="EMBL" id="AY565399">
    <property type="protein sequence ID" value="AAS74409.1"/>
    <property type="molecule type" value="Genomic_DNA"/>
</dbReference>
<dbReference type="EMBL" id="AY565400">
    <property type="protein sequence ID" value="AAS74410.1"/>
    <property type="molecule type" value="Genomic_DNA"/>
</dbReference>
<dbReference type="EMBL" id="AY565401">
    <property type="protein sequence ID" value="AAS74411.1"/>
    <property type="molecule type" value="Genomic_DNA"/>
</dbReference>
<dbReference type="EMBL" id="AY565402">
    <property type="protein sequence ID" value="AAS74412.1"/>
    <property type="molecule type" value="Genomic_DNA"/>
</dbReference>
<dbReference type="EMBL" id="AY565403">
    <property type="protein sequence ID" value="AAS74413.1"/>
    <property type="molecule type" value="Genomic_DNA"/>
</dbReference>
<dbReference type="EMBL" id="AY565404">
    <property type="protein sequence ID" value="AAS74414.1"/>
    <property type="molecule type" value="Genomic_DNA"/>
</dbReference>
<dbReference type="EMBL" id="AY565405">
    <property type="protein sequence ID" value="AAS74415.1"/>
    <property type="molecule type" value="Genomic_DNA"/>
</dbReference>
<dbReference type="EMBL" id="AY565406">
    <property type="protein sequence ID" value="AAS74416.1"/>
    <property type="molecule type" value="Genomic_DNA"/>
</dbReference>
<dbReference type="EMBL" id="AY565407">
    <property type="protein sequence ID" value="AAS74417.1"/>
    <property type="molecule type" value="Genomic_DNA"/>
</dbReference>
<dbReference type="EMBL" id="AY565408">
    <property type="protein sequence ID" value="AAS74418.1"/>
    <property type="molecule type" value="Genomic_DNA"/>
</dbReference>
<dbReference type="EMBL" id="AY565409">
    <property type="protein sequence ID" value="AAS74419.1"/>
    <property type="molecule type" value="Genomic_DNA"/>
</dbReference>
<dbReference type="EMBL" id="AY565410">
    <property type="protein sequence ID" value="AAS74420.1"/>
    <property type="molecule type" value="Genomic_DNA"/>
</dbReference>
<dbReference type="EMBL" id="AY565411">
    <property type="protein sequence ID" value="AAS74421.1"/>
    <property type="molecule type" value="Genomic_DNA"/>
</dbReference>
<dbReference type="EMBL" id="AY565412">
    <property type="protein sequence ID" value="AAS74422.1"/>
    <property type="molecule type" value="Genomic_DNA"/>
</dbReference>
<dbReference type="EMBL" id="AY565413">
    <property type="protein sequence ID" value="AAS74423.1"/>
    <property type="molecule type" value="Genomic_DNA"/>
</dbReference>
<dbReference type="EMBL" id="AY565414">
    <property type="protein sequence ID" value="AAS74424.1"/>
    <property type="molecule type" value="Genomic_DNA"/>
</dbReference>
<dbReference type="EMBL" id="AY565415">
    <property type="protein sequence ID" value="AAS74425.1"/>
    <property type="molecule type" value="Genomic_DNA"/>
</dbReference>
<dbReference type="EMBL" id="AY565416">
    <property type="protein sequence ID" value="AAS74426.1"/>
    <property type="molecule type" value="Genomic_DNA"/>
</dbReference>
<dbReference type="EMBL" id="AY565417">
    <property type="protein sequence ID" value="AAS74427.1"/>
    <property type="molecule type" value="Genomic_DNA"/>
</dbReference>
<dbReference type="EMBL" id="AY565418">
    <property type="protein sequence ID" value="AAS74428.1"/>
    <property type="molecule type" value="Genomic_DNA"/>
</dbReference>
<dbReference type="EMBL" id="AY565419">
    <property type="protein sequence ID" value="AAS74429.1"/>
    <property type="molecule type" value="Genomic_DNA"/>
</dbReference>
<dbReference type="EMBL" id="AY565420">
    <property type="protein sequence ID" value="AAS74430.1"/>
    <property type="molecule type" value="Genomic_DNA"/>
</dbReference>
<dbReference type="EMBL" id="AY565421">
    <property type="protein sequence ID" value="AAS74431.1"/>
    <property type="molecule type" value="Genomic_DNA"/>
</dbReference>
<dbReference type="EMBL" id="AY565422">
    <property type="protein sequence ID" value="AAS74432.1"/>
    <property type="molecule type" value="Genomic_DNA"/>
</dbReference>
<dbReference type="EMBL" id="AY565423">
    <property type="protein sequence ID" value="AAS74433.1"/>
    <property type="molecule type" value="Genomic_DNA"/>
</dbReference>
<dbReference type="EMBL" id="AY565424">
    <property type="protein sequence ID" value="AAS74434.1"/>
    <property type="molecule type" value="Genomic_DNA"/>
</dbReference>
<dbReference type="EMBL" id="AY565425">
    <property type="protein sequence ID" value="AAS74435.1"/>
    <property type="molecule type" value="Genomic_DNA"/>
</dbReference>
<dbReference type="EMBL" id="AY565426">
    <property type="protein sequence ID" value="AAS74436.1"/>
    <property type="molecule type" value="Genomic_DNA"/>
</dbReference>
<dbReference type="EMBL" id="AY565427">
    <property type="protein sequence ID" value="AAS74437.1"/>
    <property type="molecule type" value="Genomic_DNA"/>
</dbReference>
<dbReference type="EMBL" id="AY565428">
    <property type="protein sequence ID" value="AAS74438.1"/>
    <property type="molecule type" value="Genomic_DNA"/>
</dbReference>
<dbReference type="EMBL" id="AY565429">
    <property type="protein sequence ID" value="AAS74439.1"/>
    <property type="molecule type" value="Genomic_DNA"/>
</dbReference>
<dbReference type="EMBL" id="AY565430">
    <property type="protein sequence ID" value="AAS74440.1"/>
    <property type="molecule type" value="Genomic_DNA"/>
</dbReference>
<dbReference type="EMBL" id="AY565431">
    <property type="protein sequence ID" value="AAS74441.1"/>
    <property type="molecule type" value="Genomic_DNA"/>
</dbReference>
<dbReference type="EMBL" id="AY565432">
    <property type="protein sequence ID" value="AAS74442.1"/>
    <property type="molecule type" value="Genomic_DNA"/>
</dbReference>
<dbReference type="EMBL" id="AY565433">
    <property type="protein sequence ID" value="AAS74443.1"/>
    <property type="molecule type" value="Genomic_DNA"/>
</dbReference>
<dbReference type="EMBL" id="AY565434">
    <property type="protein sequence ID" value="AAS74444.1"/>
    <property type="molecule type" value="Genomic_DNA"/>
</dbReference>
<dbReference type="EMBL" id="AY565435">
    <property type="protein sequence ID" value="AAS74445.1"/>
    <property type="molecule type" value="Genomic_DNA"/>
</dbReference>
<dbReference type="EMBL" id="AY565436">
    <property type="protein sequence ID" value="AAS74446.1"/>
    <property type="molecule type" value="Genomic_DNA"/>
</dbReference>
<dbReference type="EMBL" id="AY565437">
    <property type="protein sequence ID" value="AAS74447.1"/>
    <property type="molecule type" value="Genomic_DNA"/>
</dbReference>
<dbReference type="EMBL" id="AY565438">
    <property type="protein sequence ID" value="AAS74448.1"/>
    <property type="molecule type" value="Genomic_DNA"/>
</dbReference>
<dbReference type="EMBL" id="AY565439">
    <property type="protein sequence ID" value="AAS74449.1"/>
    <property type="molecule type" value="Genomic_DNA"/>
</dbReference>
<dbReference type="EMBL" id="AY565440">
    <property type="protein sequence ID" value="AAS74450.1"/>
    <property type="molecule type" value="Genomic_DNA"/>
</dbReference>
<dbReference type="EMBL" id="AY565441">
    <property type="protein sequence ID" value="AAS74451.1"/>
    <property type="molecule type" value="Genomic_DNA"/>
</dbReference>
<dbReference type="EMBL" id="AY565442">
    <property type="protein sequence ID" value="AAS74452.1"/>
    <property type="molecule type" value="Genomic_DNA"/>
</dbReference>
<dbReference type="EMBL" id="AY565443">
    <property type="protein sequence ID" value="AAS74453.1"/>
    <property type="molecule type" value="Genomic_DNA"/>
</dbReference>
<dbReference type="EMBL" id="AY565444">
    <property type="protein sequence ID" value="AAS74454.1"/>
    <property type="molecule type" value="Genomic_DNA"/>
</dbReference>
<dbReference type="EMBL" id="AY565445">
    <property type="protein sequence ID" value="AAS74455.1"/>
    <property type="molecule type" value="Genomic_DNA"/>
</dbReference>
<dbReference type="EMBL" id="AY565446">
    <property type="protein sequence ID" value="AAS74456.1"/>
    <property type="molecule type" value="Genomic_DNA"/>
</dbReference>
<dbReference type="EMBL" id="AY565447">
    <property type="protein sequence ID" value="AAS74457.1"/>
    <property type="molecule type" value="Genomic_DNA"/>
</dbReference>
<dbReference type="EMBL" id="AY565448">
    <property type="protein sequence ID" value="AAS74458.1"/>
    <property type="molecule type" value="Genomic_DNA"/>
</dbReference>
<dbReference type="EMBL" id="AY565449">
    <property type="protein sequence ID" value="AAS74459.1"/>
    <property type="molecule type" value="Genomic_DNA"/>
</dbReference>
<dbReference type="EMBL" id="AY565450">
    <property type="protein sequence ID" value="AAS74460.1"/>
    <property type="molecule type" value="Genomic_DNA"/>
</dbReference>
<dbReference type="EMBL" id="AY565451">
    <property type="protein sequence ID" value="AAS74461.1"/>
    <property type="molecule type" value="Genomic_DNA"/>
</dbReference>
<dbReference type="EMBL" id="AY565452">
    <property type="protein sequence ID" value="AAS74462.1"/>
    <property type="molecule type" value="Genomic_DNA"/>
</dbReference>
<dbReference type="EMBL" id="AY565453">
    <property type="protein sequence ID" value="AAS74463.1"/>
    <property type="molecule type" value="Genomic_DNA"/>
</dbReference>
<dbReference type="EMBL" id="AY565454">
    <property type="protein sequence ID" value="AAS74464.1"/>
    <property type="molecule type" value="Genomic_DNA"/>
</dbReference>
<dbReference type="EMBL" id="AY565455">
    <property type="protein sequence ID" value="AAS74465.1"/>
    <property type="molecule type" value="Genomic_DNA"/>
</dbReference>
<dbReference type="EMBL" id="AY565456">
    <property type="protein sequence ID" value="AAS74466.1"/>
    <property type="molecule type" value="Genomic_DNA"/>
</dbReference>
<dbReference type="EMBL" id="AY565457">
    <property type="protein sequence ID" value="AAS74467.1"/>
    <property type="molecule type" value="Genomic_DNA"/>
</dbReference>
<dbReference type="EMBL" id="AY565458">
    <property type="protein sequence ID" value="AAS74468.1"/>
    <property type="molecule type" value="Genomic_DNA"/>
</dbReference>
<dbReference type="EMBL" id="AY565459">
    <property type="protein sequence ID" value="AAS74469.1"/>
    <property type="molecule type" value="Genomic_DNA"/>
</dbReference>
<dbReference type="EMBL" id="AY565460">
    <property type="protein sequence ID" value="AAS74470.1"/>
    <property type="molecule type" value="Genomic_DNA"/>
</dbReference>
<dbReference type="EMBL" id="AY565461">
    <property type="protein sequence ID" value="AAS74471.1"/>
    <property type="molecule type" value="Genomic_DNA"/>
</dbReference>
<dbReference type="EMBL" id="AY565462">
    <property type="protein sequence ID" value="AAS74472.1"/>
    <property type="molecule type" value="Genomic_DNA"/>
</dbReference>
<dbReference type="EMBL" id="AY565463">
    <property type="protein sequence ID" value="AAS74473.1"/>
    <property type="molecule type" value="Genomic_DNA"/>
</dbReference>
<dbReference type="EMBL" id="AY565464">
    <property type="protein sequence ID" value="AAS74474.1"/>
    <property type="molecule type" value="Genomic_DNA"/>
</dbReference>
<dbReference type="EMBL" id="AY565465">
    <property type="protein sequence ID" value="AAS74475.1"/>
    <property type="molecule type" value="Genomic_DNA"/>
</dbReference>
<dbReference type="EMBL" id="AY565466">
    <property type="protein sequence ID" value="AAS74476.1"/>
    <property type="molecule type" value="Genomic_DNA"/>
</dbReference>
<dbReference type="EMBL" id="AY565467">
    <property type="protein sequence ID" value="AAS74477.1"/>
    <property type="molecule type" value="Genomic_DNA"/>
</dbReference>
<dbReference type="EMBL" id="AY565468">
    <property type="protein sequence ID" value="AAS74478.1"/>
    <property type="molecule type" value="Genomic_DNA"/>
</dbReference>
<dbReference type="EMBL" id="AY565469">
    <property type="protein sequence ID" value="AAS74479.1"/>
    <property type="molecule type" value="Genomic_DNA"/>
</dbReference>
<dbReference type="EMBL" id="AY565470">
    <property type="protein sequence ID" value="AAS74480.1"/>
    <property type="molecule type" value="Genomic_DNA"/>
</dbReference>
<dbReference type="EMBL" id="AY565471">
    <property type="protein sequence ID" value="AAS74481.1"/>
    <property type="molecule type" value="Genomic_DNA"/>
</dbReference>
<dbReference type="EMBL" id="AY565472">
    <property type="protein sequence ID" value="AAS74482.1"/>
    <property type="molecule type" value="Genomic_DNA"/>
</dbReference>
<dbReference type="EMBL" id="AY565473">
    <property type="protein sequence ID" value="AAS74483.1"/>
    <property type="molecule type" value="Genomic_DNA"/>
</dbReference>
<dbReference type="EMBL" id="AY565474">
    <property type="protein sequence ID" value="AAS74484.1"/>
    <property type="molecule type" value="Genomic_DNA"/>
</dbReference>
<dbReference type="EMBL" id="AY565475">
    <property type="protein sequence ID" value="AAS74485.1"/>
    <property type="molecule type" value="Genomic_DNA"/>
</dbReference>
<dbReference type="EMBL" id="AY565476">
    <property type="protein sequence ID" value="AAS74486.1"/>
    <property type="molecule type" value="Genomic_DNA"/>
</dbReference>
<dbReference type="EMBL" id="AY565477">
    <property type="protein sequence ID" value="AAS74487.1"/>
    <property type="molecule type" value="Genomic_DNA"/>
</dbReference>
<dbReference type="EMBL" id="AY565478">
    <property type="protein sequence ID" value="AAS74488.1"/>
    <property type="molecule type" value="Genomic_DNA"/>
</dbReference>
<dbReference type="EMBL" id="AY565479">
    <property type="protein sequence ID" value="AAS74489.1"/>
    <property type="molecule type" value="Genomic_DNA"/>
</dbReference>
<dbReference type="EMBL" id="AY565480">
    <property type="protein sequence ID" value="AAS74490.1"/>
    <property type="molecule type" value="Genomic_DNA"/>
</dbReference>
<dbReference type="EMBL" id="AY565481">
    <property type="protein sequence ID" value="AAS74491.1"/>
    <property type="molecule type" value="Genomic_DNA"/>
</dbReference>
<dbReference type="EMBL" id="AY565482">
    <property type="protein sequence ID" value="AAS74492.1"/>
    <property type="molecule type" value="Genomic_DNA"/>
</dbReference>
<dbReference type="EMBL" id="AY565483">
    <property type="protein sequence ID" value="AAS74493.1"/>
    <property type="molecule type" value="Genomic_DNA"/>
</dbReference>
<dbReference type="EMBL" id="AY565484">
    <property type="protein sequence ID" value="AAS74494.1"/>
    <property type="molecule type" value="Genomic_DNA"/>
</dbReference>
<dbReference type="EMBL" id="AY565485">
    <property type="protein sequence ID" value="AAS74495.1"/>
    <property type="molecule type" value="Genomic_DNA"/>
</dbReference>
<dbReference type="EMBL" id="AY565486">
    <property type="protein sequence ID" value="AAS74496.1"/>
    <property type="molecule type" value="Genomic_DNA"/>
</dbReference>
<dbReference type="EMBL" id="AY565487">
    <property type="protein sequence ID" value="AAS74497.1"/>
    <property type="molecule type" value="Genomic_DNA"/>
</dbReference>
<dbReference type="EMBL" id="AY565488">
    <property type="protein sequence ID" value="AAS74498.1"/>
    <property type="molecule type" value="Genomic_DNA"/>
</dbReference>
<dbReference type="EMBL" id="AY565489">
    <property type="protein sequence ID" value="AAS74499.1"/>
    <property type="molecule type" value="Genomic_DNA"/>
</dbReference>
<dbReference type="EMBL" id="AY565490">
    <property type="protein sequence ID" value="AAS74500.1"/>
    <property type="molecule type" value="Genomic_DNA"/>
</dbReference>
<dbReference type="EMBL" id="AY565491">
    <property type="protein sequence ID" value="AAS74501.1"/>
    <property type="molecule type" value="Genomic_DNA"/>
</dbReference>
<dbReference type="EMBL" id="AY565492">
    <property type="protein sequence ID" value="AAS74502.1"/>
    <property type="molecule type" value="Genomic_DNA"/>
</dbReference>
<dbReference type="EMBL" id="AY565493">
    <property type="protein sequence ID" value="AAS74503.1"/>
    <property type="molecule type" value="Genomic_DNA"/>
</dbReference>
<dbReference type="EMBL" id="AY565494">
    <property type="protein sequence ID" value="AAS74504.1"/>
    <property type="molecule type" value="Genomic_DNA"/>
</dbReference>
<dbReference type="EMBL" id="AY565495">
    <property type="protein sequence ID" value="AAS74505.1"/>
    <property type="molecule type" value="Genomic_DNA"/>
</dbReference>
<dbReference type="EMBL" id="AY565496">
    <property type="protein sequence ID" value="AAS74506.1"/>
    <property type="molecule type" value="Genomic_DNA"/>
</dbReference>
<dbReference type="EMBL" id="AY565497">
    <property type="protein sequence ID" value="AAS74507.1"/>
    <property type="molecule type" value="Genomic_DNA"/>
</dbReference>
<dbReference type="EMBL" id="AY565498">
    <property type="protein sequence ID" value="AAS74508.1"/>
    <property type="molecule type" value="Genomic_DNA"/>
</dbReference>
<dbReference type="EMBL" id="AY565499">
    <property type="protein sequence ID" value="AAS74509.1"/>
    <property type="molecule type" value="Genomic_DNA"/>
</dbReference>
<dbReference type="EMBL" id="AY565500">
    <property type="protein sequence ID" value="AAS74510.1"/>
    <property type="molecule type" value="Genomic_DNA"/>
</dbReference>
<dbReference type="EMBL" id="AY565501">
    <property type="protein sequence ID" value="AAS74511.1"/>
    <property type="molecule type" value="Genomic_DNA"/>
</dbReference>
<dbReference type="EMBL" id="AY565502">
    <property type="protein sequence ID" value="AAS74512.1"/>
    <property type="molecule type" value="Genomic_DNA"/>
</dbReference>
<dbReference type="EMBL" id="AY565503">
    <property type="protein sequence ID" value="AAS74513.1"/>
    <property type="molecule type" value="Genomic_DNA"/>
</dbReference>
<dbReference type="EMBL" id="AY565504">
    <property type="protein sequence ID" value="AAS74514.1"/>
    <property type="molecule type" value="Genomic_DNA"/>
</dbReference>
<dbReference type="EMBL" id="AY565505">
    <property type="protein sequence ID" value="AAS74515.1"/>
    <property type="molecule type" value="Genomic_DNA"/>
</dbReference>
<dbReference type="EMBL" id="AY565506">
    <property type="protein sequence ID" value="AAS74516.1"/>
    <property type="molecule type" value="Genomic_DNA"/>
</dbReference>
<dbReference type="EMBL" id="AY565507">
    <property type="protein sequence ID" value="AAS74517.1"/>
    <property type="molecule type" value="Genomic_DNA"/>
</dbReference>
<dbReference type="EMBL" id="AY565508">
    <property type="protein sequence ID" value="AAS74518.1"/>
    <property type="molecule type" value="Genomic_DNA"/>
</dbReference>
<dbReference type="EMBL" id="AY565509">
    <property type="protein sequence ID" value="AAS74519.1"/>
    <property type="molecule type" value="Genomic_DNA"/>
</dbReference>
<dbReference type="EMBL" id="AY565510">
    <property type="protein sequence ID" value="AAS74520.1"/>
    <property type="molecule type" value="Genomic_DNA"/>
</dbReference>
<dbReference type="EMBL" id="AY565511">
    <property type="protein sequence ID" value="AAS74521.1"/>
    <property type="molecule type" value="Genomic_DNA"/>
</dbReference>
<dbReference type="EMBL" id="AY565512">
    <property type="protein sequence ID" value="AAS74522.1"/>
    <property type="molecule type" value="Genomic_DNA"/>
</dbReference>
<dbReference type="EMBL" id="AY565513">
    <property type="protein sequence ID" value="AAS74523.1"/>
    <property type="molecule type" value="Genomic_DNA"/>
</dbReference>
<dbReference type="EMBL" id="AY565514">
    <property type="protein sequence ID" value="AAS74524.1"/>
    <property type="molecule type" value="Genomic_DNA"/>
</dbReference>
<dbReference type="EMBL" id="AY565515">
    <property type="protein sequence ID" value="AAS74525.1"/>
    <property type="molecule type" value="Genomic_DNA"/>
</dbReference>
<dbReference type="EMBL" id="AY565516">
    <property type="protein sequence ID" value="AAS74526.1"/>
    <property type="molecule type" value="Genomic_DNA"/>
</dbReference>
<dbReference type="EMBL" id="AY565517">
    <property type="protein sequence ID" value="AAS74527.1"/>
    <property type="molecule type" value="Genomic_DNA"/>
</dbReference>
<dbReference type="EMBL" id="AY565518">
    <property type="protein sequence ID" value="AAS74528.1"/>
    <property type="molecule type" value="Genomic_DNA"/>
</dbReference>
<dbReference type="EMBL" id="AY565519">
    <property type="protein sequence ID" value="AAS74529.1"/>
    <property type="molecule type" value="Genomic_DNA"/>
</dbReference>
<dbReference type="EMBL" id="AY565520">
    <property type="protein sequence ID" value="AAS74530.1"/>
    <property type="molecule type" value="Genomic_DNA"/>
</dbReference>
<dbReference type="EMBL" id="AY565521">
    <property type="protein sequence ID" value="AAS74531.1"/>
    <property type="molecule type" value="Genomic_DNA"/>
</dbReference>
<dbReference type="EMBL" id="AY565522">
    <property type="protein sequence ID" value="AAS74532.1"/>
    <property type="molecule type" value="Genomic_DNA"/>
</dbReference>
<dbReference type="EMBL" id="AY565523">
    <property type="protein sequence ID" value="AAS74533.1"/>
    <property type="molecule type" value="Genomic_DNA"/>
</dbReference>
<dbReference type="EMBL" id="AY565524">
    <property type="protein sequence ID" value="AAS74534.1"/>
    <property type="molecule type" value="Genomic_DNA"/>
</dbReference>
<dbReference type="EMBL" id="AY565525">
    <property type="protein sequence ID" value="AAS74535.1"/>
    <property type="molecule type" value="Genomic_DNA"/>
</dbReference>
<dbReference type="EMBL" id="AY565526">
    <property type="protein sequence ID" value="AAS74536.1"/>
    <property type="molecule type" value="Genomic_DNA"/>
</dbReference>
<dbReference type="EMBL" id="AY565527">
    <property type="protein sequence ID" value="AAS74537.1"/>
    <property type="molecule type" value="Genomic_DNA"/>
</dbReference>
<dbReference type="EMBL" id="AY565528">
    <property type="protein sequence ID" value="AAS74538.1"/>
    <property type="molecule type" value="Genomic_DNA"/>
</dbReference>
<dbReference type="EMBL" id="AY565529">
    <property type="protein sequence ID" value="AAS74539.1"/>
    <property type="molecule type" value="Genomic_DNA"/>
</dbReference>
<dbReference type="EMBL" id="AY565530">
    <property type="protein sequence ID" value="AAS74540.1"/>
    <property type="molecule type" value="Genomic_DNA"/>
</dbReference>
<dbReference type="EMBL" id="AY565531">
    <property type="protein sequence ID" value="AAS74541.1"/>
    <property type="molecule type" value="Genomic_DNA"/>
</dbReference>
<dbReference type="EMBL" id="AY565532">
    <property type="protein sequence ID" value="AAS74542.1"/>
    <property type="molecule type" value="Genomic_DNA"/>
</dbReference>
<dbReference type="EMBL" id="AY565533">
    <property type="protein sequence ID" value="AAS74543.1"/>
    <property type="molecule type" value="Genomic_DNA"/>
</dbReference>
<dbReference type="EMBL" id="AY565534">
    <property type="protein sequence ID" value="AAS74544.1"/>
    <property type="molecule type" value="Genomic_DNA"/>
</dbReference>
<dbReference type="EMBL" id="AY565535">
    <property type="protein sequence ID" value="AAS74545.1"/>
    <property type="molecule type" value="Genomic_DNA"/>
</dbReference>
<dbReference type="EMBL" id="AY565536">
    <property type="protein sequence ID" value="AAS74546.1"/>
    <property type="molecule type" value="Genomic_DNA"/>
</dbReference>
<dbReference type="EMBL" id="AY565537">
    <property type="protein sequence ID" value="AAS74547.1"/>
    <property type="molecule type" value="Genomic_DNA"/>
</dbReference>
<dbReference type="EMBL" id="AY565538">
    <property type="protein sequence ID" value="AAS74548.1"/>
    <property type="molecule type" value="Genomic_DNA"/>
</dbReference>
<dbReference type="EMBL" id="AY565539">
    <property type="protein sequence ID" value="AAS74549.1"/>
    <property type="molecule type" value="Genomic_DNA"/>
</dbReference>
<dbReference type="EMBL" id="AY565540">
    <property type="protein sequence ID" value="AAS74550.1"/>
    <property type="molecule type" value="Genomic_DNA"/>
</dbReference>
<dbReference type="EMBL" id="AY565541">
    <property type="protein sequence ID" value="AAS74551.1"/>
    <property type="molecule type" value="Genomic_DNA"/>
</dbReference>
<dbReference type="EMBL" id="AY565542">
    <property type="protein sequence ID" value="AAS74552.1"/>
    <property type="molecule type" value="Genomic_DNA"/>
</dbReference>
<dbReference type="EMBL" id="AY565543">
    <property type="protein sequence ID" value="AAS74553.1"/>
    <property type="molecule type" value="Genomic_DNA"/>
</dbReference>
<dbReference type="EMBL" id="AY565544">
    <property type="protein sequence ID" value="AAS74554.1"/>
    <property type="molecule type" value="Genomic_DNA"/>
</dbReference>
<dbReference type="EMBL" id="AY565545">
    <property type="protein sequence ID" value="AAS74555.1"/>
    <property type="molecule type" value="Genomic_DNA"/>
</dbReference>
<dbReference type="EMBL" id="AY565546">
    <property type="protein sequence ID" value="AAS74556.1"/>
    <property type="molecule type" value="Genomic_DNA"/>
</dbReference>
<dbReference type="EMBL" id="AY565547">
    <property type="protein sequence ID" value="AAS74557.1"/>
    <property type="molecule type" value="Genomic_DNA"/>
</dbReference>
<dbReference type="EMBL" id="AY565548">
    <property type="protein sequence ID" value="AAS74558.1"/>
    <property type="molecule type" value="Genomic_DNA"/>
</dbReference>
<dbReference type="EMBL" id="AY565549">
    <property type="protein sequence ID" value="AAS74559.1"/>
    <property type="molecule type" value="Genomic_DNA"/>
</dbReference>
<dbReference type="EMBL" id="AY565550">
    <property type="protein sequence ID" value="AAS74560.1"/>
    <property type="molecule type" value="Genomic_DNA"/>
</dbReference>
<dbReference type="EMBL" id="AY565551">
    <property type="protein sequence ID" value="AAS74561.1"/>
    <property type="molecule type" value="Genomic_DNA"/>
</dbReference>
<dbReference type="EMBL" id="AY565552">
    <property type="protein sequence ID" value="AAS74562.1"/>
    <property type="molecule type" value="Genomic_DNA"/>
</dbReference>
<dbReference type="EMBL" id="AY565553">
    <property type="protein sequence ID" value="AAS74563.1"/>
    <property type="molecule type" value="Genomic_DNA"/>
</dbReference>
<dbReference type="EMBL" id="AY565554">
    <property type="protein sequence ID" value="AAS74564.1"/>
    <property type="molecule type" value="Genomic_DNA"/>
</dbReference>
<dbReference type="EMBL" id="AY565555">
    <property type="protein sequence ID" value="AAS74565.1"/>
    <property type="molecule type" value="Genomic_DNA"/>
</dbReference>
<dbReference type="EMBL" id="AY565556">
    <property type="protein sequence ID" value="AAS74566.1"/>
    <property type="molecule type" value="Genomic_DNA"/>
</dbReference>
<dbReference type="EMBL" id="AY565557">
    <property type="protein sequence ID" value="AAS74567.1"/>
    <property type="molecule type" value="Genomic_DNA"/>
</dbReference>
<dbReference type="EMBL" id="AY565558">
    <property type="protein sequence ID" value="AAS74568.1"/>
    <property type="molecule type" value="Genomic_DNA"/>
</dbReference>
<dbReference type="EMBL" id="AY565559">
    <property type="protein sequence ID" value="AAS74569.1"/>
    <property type="molecule type" value="Genomic_DNA"/>
</dbReference>
<dbReference type="EMBL" id="AY565560">
    <property type="protein sequence ID" value="AAS74570.1"/>
    <property type="molecule type" value="Genomic_DNA"/>
</dbReference>
<dbReference type="EMBL" id="AY565561">
    <property type="protein sequence ID" value="AAS74571.1"/>
    <property type="molecule type" value="Genomic_DNA"/>
</dbReference>
<dbReference type="EMBL" id="AY565562">
    <property type="protein sequence ID" value="AAS74572.1"/>
    <property type="molecule type" value="Genomic_DNA"/>
</dbReference>
<dbReference type="EMBL" id="AY565563">
    <property type="protein sequence ID" value="AAS74573.1"/>
    <property type="molecule type" value="Genomic_DNA"/>
</dbReference>
<dbReference type="EMBL" id="AY565564">
    <property type="protein sequence ID" value="AAS74574.1"/>
    <property type="molecule type" value="Genomic_DNA"/>
</dbReference>
<dbReference type="EMBL" id="AY565565">
    <property type="protein sequence ID" value="AAS74575.1"/>
    <property type="molecule type" value="Genomic_DNA"/>
</dbReference>
<dbReference type="EMBL" id="AY565566">
    <property type="protein sequence ID" value="AAS74576.1"/>
    <property type="molecule type" value="Genomic_DNA"/>
</dbReference>
<dbReference type="EMBL" id="AY565567">
    <property type="protein sequence ID" value="AAS74577.1"/>
    <property type="molecule type" value="Genomic_DNA"/>
</dbReference>
<dbReference type="EMBL" id="AY565568">
    <property type="protein sequence ID" value="AAS74578.1"/>
    <property type="molecule type" value="Genomic_DNA"/>
</dbReference>
<dbReference type="EMBL" id="AY565569">
    <property type="protein sequence ID" value="AAS74579.1"/>
    <property type="molecule type" value="Genomic_DNA"/>
</dbReference>
<dbReference type="EMBL" id="AY565570">
    <property type="protein sequence ID" value="AAS74580.1"/>
    <property type="molecule type" value="Genomic_DNA"/>
</dbReference>
<dbReference type="EMBL" id="AY565571">
    <property type="protein sequence ID" value="AAS74581.1"/>
    <property type="molecule type" value="Genomic_DNA"/>
</dbReference>
<dbReference type="EMBL" id="AY565572">
    <property type="protein sequence ID" value="AAS74582.1"/>
    <property type="molecule type" value="Genomic_DNA"/>
</dbReference>
<dbReference type="EMBL" id="AY565573">
    <property type="protein sequence ID" value="AAS74583.1"/>
    <property type="molecule type" value="Genomic_DNA"/>
</dbReference>
<dbReference type="EMBL" id="AY565574">
    <property type="protein sequence ID" value="AAS74584.1"/>
    <property type="molecule type" value="Genomic_DNA"/>
</dbReference>
<dbReference type="EMBL" id="AY565575">
    <property type="protein sequence ID" value="AAS74585.1"/>
    <property type="molecule type" value="Genomic_DNA"/>
</dbReference>
<dbReference type="EMBL" id="AY565576">
    <property type="protein sequence ID" value="AAS74586.1"/>
    <property type="molecule type" value="Genomic_DNA"/>
</dbReference>
<dbReference type="EMBL" id="AY565577">
    <property type="protein sequence ID" value="AAS74587.1"/>
    <property type="molecule type" value="Genomic_DNA"/>
</dbReference>
<dbReference type="EMBL" id="AY565578">
    <property type="protein sequence ID" value="AAS74588.1"/>
    <property type="molecule type" value="Genomic_DNA"/>
</dbReference>
<dbReference type="EMBL" id="AY565579">
    <property type="protein sequence ID" value="AAS74589.1"/>
    <property type="molecule type" value="Genomic_DNA"/>
</dbReference>
<dbReference type="EMBL" id="AY565580">
    <property type="protein sequence ID" value="AAS74590.1"/>
    <property type="molecule type" value="Genomic_DNA"/>
</dbReference>
<dbReference type="EMBL" id="AY565581">
    <property type="protein sequence ID" value="AAS74591.1"/>
    <property type="molecule type" value="Genomic_DNA"/>
</dbReference>
<dbReference type="EMBL" id="AY565582">
    <property type="protein sequence ID" value="AAS74592.1"/>
    <property type="molecule type" value="Genomic_DNA"/>
</dbReference>
<dbReference type="EMBL" id="AY565583">
    <property type="protein sequence ID" value="AAS74593.1"/>
    <property type="molecule type" value="Genomic_DNA"/>
</dbReference>
<dbReference type="EMBL" id="AY565584">
    <property type="protein sequence ID" value="AAS74594.1"/>
    <property type="molecule type" value="Genomic_DNA"/>
</dbReference>
<dbReference type="EMBL" id="AY565585">
    <property type="protein sequence ID" value="AAS74595.1"/>
    <property type="molecule type" value="Genomic_DNA"/>
</dbReference>
<dbReference type="EMBL" id="AY565586">
    <property type="protein sequence ID" value="AAS74596.1"/>
    <property type="molecule type" value="Genomic_DNA"/>
</dbReference>
<dbReference type="EMBL" id="AY565587">
    <property type="protein sequence ID" value="AAS74597.1"/>
    <property type="molecule type" value="Genomic_DNA"/>
</dbReference>
<dbReference type="EMBL" id="AY565588">
    <property type="protein sequence ID" value="AAS74598.1"/>
    <property type="molecule type" value="Genomic_DNA"/>
</dbReference>
<dbReference type="EMBL" id="AY565589">
    <property type="protein sequence ID" value="AAS74599.1"/>
    <property type="molecule type" value="Genomic_DNA"/>
</dbReference>
<dbReference type="EMBL" id="AY565590">
    <property type="protein sequence ID" value="AAS74600.1"/>
    <property type="molecule type" value="Genomic_DNA"/>
</dbReference>
<dbReference type="EMBL" id="AY565591">
    <property type="protein sequence ID" value="AAS74601.1"/>
    <property type="molecule type" value="Genomic_DNA"/>
</dbReference>
<dbReference type="EMBL" id="AY565592">
    <property type="protein sequence ID" value="AAS74602.1"/>
    <property type="molecule type" value="Genomic_DNA"/>
</dbReference>
<dbReference type="EMBL" id="AY565593">
    <property type="protein sequence ID" value="AAS74603.1"/>
    <property type="molecule type" value="Genomic_DNA"/>
</dbReference>
<dbReference type="EMBL" id="AY565594">
    <property type="protein sequence ID" value="AAS74604.1"/>
    <property type="molecule type" value="Genomic_DNA"/>
</dbReference>
<dbReference type="EMBL" id="AY565595">
    <property type="protein sequence ID" value="AAS74605.1"/>
    <property type="molecule type" value="Genomic_DNA"/>
</dbReference>
<dbReference type="EMBL" id="AY565596">
    <property type="protein sequence ID" value="AAS74606.1"/>
    <property type="molecule type" value="Genomic_DNA"/>
</dbReference>
<dbReference type="EMBL" id="AY565597">
    <property type="protein sequence ID" value="AAS74607.1"/>
    <property type="molecule type" value="Genomic_DNA"/>
</dbReference>
<dbReference type="EMBL" id="AY565598">
    <property type="protein sequence ID" value="AAS74608.1"/>
    <property type="molecule type" value="Genomic_DNA"/>
</dbReference>
<dbReference type="EMBL" id="AY565599">
    <property type="protein sequence ID" value="AAS74609.1"/>
    <property type="molecule type" value="Genomic_DNA"/>
</dbReference>
<dbReference type="EMBL" id="AY565600">
    <property type="protein sequence ID" value="AAS74610.1"/>
    <property type="molecule type" value="Genomic_DNA"/>
</dbReference>
<dbReference type="EMBL" id="AY565601">
    <property type="protein sequence ID" value="AAS74611.1"/>
    <property type="molecule type" value="Genomic_DNA"/>
</dbReference>
<dbReference type="EMBL" id="AY565602">
    <property type="protein sequence ID" value="AAS74612.1"/>
    <property type="molecule type" value="Genomic_DNA"/>
</dbReference>
<dbReference type="EMBL" id="AY565603">
    <property type="protein sequence ID" value="AAS74613.1"/>
    <property type="molecule type" value="Genomic_DNA"/>
</dbReference>
<dbReference type="EMBL" id="AY565604">
    <property type="protein sequence ID" value="AAS74614.1"/>
    <property type="molecule type" value="Genomic_DNA"/>
</dbReference>
<dbReference type="EMBL" id="AY565605">
    <property type="protein sequence ID" value="AAS74615.1"/>
    <property type="molecule type" value="Genomic_DNA"/>
</dbReference>
<dbReference type="EMBL" id="AY565606">
    <property type="protein sequence ID" value="AAS74616.1"/>
    <property type="molecule type" value="Genomic_DNA"/>
</dbReference>
<dbReference type="EMBL" id="AY565607">
    <property type="protein sequence ID" value="AAS74617.1"/>
    <property type="molecule type" value="Genomic_DNA"/>
</dbReference>
<dbReference type="EMBL" id="AY565608">
    <property type="protein sequence ID" value="AAS74618.1"/>
    <property type="molecule type" value="Genomic_DNA"/>
</dbReference>
<dbReference type="EMBL" id="AY565609">
    <property type="protein sequence ID" value="AAS74619.1"/>
    <property type="molecule type" value="Genomic_DNA"/>
</dbReference>
<dbReference type="EMBL" id="AY565610">
    <property type="protein sequence ID" value="AAS74620.1"/>
    <property type="molecule type" value="Genomic_DNA"/>
</dbReference>
<dbReference type="EMBL" id="AY565611">
    <property type="protein sequence ID" value="AAS74621.1"/>
    <property type="molecule type" value="Genomic_DNA"/>
</dbReference>
<dbReference type="EMBL" id="AY565612">
    <property type="protein sequence ID" value="AAS74622.1"/>
    <property type="molecule type" value="Genomic_DNA"/>
</dbReference>
<dbReference type="EMBL" id="AY565613">
    <property type="protein sequence ID" value="AAS74623.1"/>
    <property type="molecule type" value="Genomic_DNA"/>
</dbReference>
<dbReference type="EMBL" id="AY565614">
    <property type="protein sequence ID" value="AAS74624.1"/>
    <property type="molecule type" value="Genomic_DNA"/>
</dbReference>
<dbReference type="EMBL" id="AY565615">
    <property type="protein sequence ID" value="AAS74625.1"/>
    <property type="molecule type" value="Genomic_DNA"/>
</dbReference>
<dbReference type="EMBL" id="AY565616">
    <property type="protein sequence ID" value="AAS74626.1"/>
    <property type="molecule type" value="Genomic_DNA"/>
</dbReference>
<dbReference type="EMBL" id="AY565617">
    <property type="protein sequence ID" value="AAS74627.1"/>
    <property type="molecule type" value="Genomic_DNA"/>
</dbReference>
<dbReference type="EMBL" id="AY565618">
    <property type="protein sequence ID" value="AAS74628.1"/>
    <property type="molecule type" value="Genomic_DNA"/>
</dbReference>
<dbReference type="EMBL" id="AY565619">
    <property type="protein sequence ID" value="AAS74629.1"/>
    <property type="molecule type" value="Genomic_DNA"/>
</dbReference>
<dbReference type="EMBL" id="AY565620">
    <property type="protein sequence ID" value="AAS74630.1"/>
    <property type="molecule type" value="Genomic_DNA"/>
</dbReference>
<dbReference type="EMBL" id="AY565621">
    <property type="protein sequence ID" value="AAS74631.1"/>
    <property type="molecule type" value="Genomic_DNA"/>
</dbReference>
<dbReference type="EMBL" id="AY565622">
    <property type="protein sequence ID" value="AAS74632.1"/>
    <property type="molecule type" value="Genomic_DNA"/>
</dbReference>
<dbReference type="EMBL" id="AY565623">
    <property type="protein sequence ID" value="AAS74633.1"/>
    <property type="molecule type" value="Genomic_DNA"/>
</dbReference>
<dbReference type="EMBL" id="AY565624">
    <property type="protein sequence ID" value="AAS74634.1"/>
    <property type="molecule type" value="Genomic_DNA"/>
</dbReference>
<dbReference type="EMBL" id="AY565625">
    <property type="protein sequence ID" value="AAS74635.1"/>
    <property type="molecule type" value="Genomic_DNA"/>
</dbReference>
<dbReference type="EMBL" id="AY565626">
    <property type="protein sequence ID" value="AAS74636.1"/>
    <property type="molecule type" value="Genomic_DNA"/>
</dbReference>
<dbReference type="EMBL" id="AY565627">
    <property type="protein sequence ID" value="AAS74637.1"/>
    <property type="molecule type" value="Genomic_DNA"/>
</dbReference>
<dbReference type="EMBL" id="AY565628">
    <property type="protein sequence ID" value="AAS74638.1"/>
    <property type="molecule type" value="Genomic_DNA"/>
</dbReference>
<dbReference type="EMBL" id="AY565629">
    <property type="protein sequence ID" value="AAS74639.1"/>
    <property type="molecule type" value="Genomic_DNA"/>
</dbReference>
<dbReference type="EMBL" id="AY565630">
    <property type="protein sequence ID" value="AAS74640.1"/>
    <property type="molecule type" value="Genomic_DNA"/>
</dbReference>
<dbReference type="EMBL" id="AY565631">
    <property type="protein sequence ID" value="AAS74641.1"/>
    <property type="molecule type" value="Genomic_DNA"/>
</dbReference>
<dbReference type="EMBL" id="AY565632">
    <property type="protein sequence ID" value="AAS74642.1"/>
    <property type="molecule type" value="Genomic_DNA"/>
</dbReference>
<dbReference type="EMBL" id="AY565633">
    <property type="protein sequence ID" value="AAS74643.1"/>
    <property type="molecule type" value="Genomic_DNA"/>
</dbReference>
<dbReference type="EMBL" id="AY565634">
    <property type="protein sequence ID" value="AAS74644.1"/>
    <property type="molecule type" value="Genomic_DNA"/>
</dbReference>
<dbReference type="EMBL" id="AY565635">
    <property type="protein sequence ID" value="AAS74645.1"/>
    <property type="molecule type" value="Genomic_DNA"/>
</dbReference>
<dbReference type="EMBL" id="AY565636">
    <property type="protein sequence ID" value="AAS74646.1"/>
    <property type="molecule type" value="Genomic_DNA"/>
</dbReference>
<dbReference type="EMBL" id="AY565637">
    <property type="protein sequence ID" value="AAS74647.1"/>
    <property type="molecule type" value="Genomic_DNA"/>
</dbReference>
<dbReference type="EMBL" id="AY565638">
    <property type="protein sequence ID" value="AAS74648.1"/>
    <property type="molecule type" value="Genomic_DNA"/>
</dbReference>
<dbReference type="EMBL" id="AY565639">
    <property type="protein sequence ID" value="AAS74649.1"/>
    <property type="molecule type" value="Genomic_DNA"/>
</dbReference>
<dbReference type="EMBL" id="AY565640">
    <property type="protein sequence ID" value="AAS74650.1"/>
    <property type="molecule type" value="Genomic_DNA"/>
</dbReference>
<dbReference type="EMBL" id="AY565641">
    <property type="protein sequence ID" value="AAS74651.1"/>
    <property type="molecule type" value="Genomic_DNA"/>
</dbReference>
<dbReference type="EMBL" id="AY565642">
    <property type="protein sequence ID" value="AAS74652.1"/>
    <property type="molecule type" value="Genomic_DNA"/>
</dbReference>
<dbReference type="EMBL" id="AY565643">
    <property type="protein sequence ID" value="AAS74653.1"/>
    <property type="molecule type" value="Genomic_DNA"/>
</dbReference>
<dbReference type="EMBL" id="AY565644">
    <property type="protein sequence ID" value="AAS74654.1"/>
    <property type="molecule type" value="Genomic_DNA"/>
</dbReference>
<dbReference type="EMBL" id="AY565645">
    <property type="protein sequence ID" value="AAS74655.1"/>
    <property type="molecule type" value="Genomic_DNA"/>
</dbReference>
<dbReference type="EMBL" id="AY565646">
    <property type="protein sequence ID" value="AAS74656.1"/>
    <property type="molecule type" value="Genomic_DNA"/>
</dbReference>
<dbReference type="EMBL" id="AY565647">
    <property type="protein sequence ID" value="AAS74657.1"/>
    <property type="molecule type" value="Genomic_DNA"/>
</dbReference>
<dbReference type="EMBL" id="AY565648">
    <property type="protein sequence ID" value="AAS74658.1"/>
    <property type="molecule type" value="Genomic_DNA"/>
</dbReference>
<dbReference type="EMBL" id="AY565649">
    <property type="protein sequence ID" value="AAS74659.1"/>
    <property type="molecule type" value="Genomic_DNA"/>
</dbReference>
<dbReference type="EMBL" id="AY565650">
    <property type="protein sequence ID" value="AAS74660.1"/>
    <property type="molecule type" value="Genomic_DNA"/>
</dbReference>
<dbReference type="EMBL" id="AY565651">
    <property type="protein sequence ID" value="AAS74661.1"/>
    <property type="molecule type" value="Genomic_DNA"/>
</dbReference>
<dbReference type="EMBL" id="AY565652">
    <property type="protein sequence ID" value="AAS74662.1"/>
    <property type="molecule type" value="Genomic_DNA"/>
</dbReference>
<dbReference type="EMBL" id="AY565653">
    <property type="protein sequence ID" value="AAS74663.1"/>
    <property type="molecule type" value="Genomic_DNA"/>
</dbReference>
<dbReference type="EMBL" id="AY565654">
    <property type="protein sequence ID" value="AAS74664.1"/>
    <property type="molecule type" value="Genomic_DNA"/>
</dbReference>
<dbReference type="EMBL" id="AY565655">
    <property type="protein sequence ID" value="AAS74665.1"/>
    <property type="molecule type" value="Genomic_DNA"/>
</dbReference>
<dbReference type="EMBL" id="AY565656">
    <property type="protein sequence ID" value="AAS74666.1"/>
    <property type="molecule type" value="Genomic_DNA"/>
</dbReference>
<dbReference type="EMBL" id="AY565657">
    <property type="protein sequence ID" value="AAS74667.1"/>
    <property type="molecule type" value="Genomic_DNA"/>
</dbReference>
<dbReference type="EMBL" id="AY565658">
    <property type="protein sequence ID" value="AAS74668.1"/>
    <property type="molecule type" value="Genomic_DNA"/>
</dbReference>
<dbReference type="EMBL" id="AY565659">
    <property type="protein sequence ID" value="AAS74669.1"/>
    <property type="molecule type" value="Genomic_DNA"/>
</dbReference>
<dbReference type="EMBL" id="AY565660">
    <property type="protein sequence ID" value="AAS74670.1"/>
    <property type="molecule type" value="Genomic_DNA"/>
</dbReference>
<dbReference type="EMBL" id="AY565661">
    <property type="protein sequence ID" value="AAS74671.1"/>
    <property type="molecule type" value="Genomic_DNA"/>
</dbReference>
<dbReference type="EMBL" id="AY565662">
    <property type="protein sequence ID" value="AAS74672.1"/>
    <property type="molecule type" value="Genomic_DNA"/>
</dbReference>
<dbReference type="EMBL" id="AY565663">
    <property type="protein sequence ID" value="AAS74673.1"/>
    <property type="molecule type" value="Genomic_DNA"/>
</dbReference>
<dbReference type="EMBL" id="AY565664">
    <property type="protein sequence ID" value="AAS74674.1"/>
    <property type="molecule type" value="Genomic_DNA"/>
</dbReference>
<dbReference type="EMBL" id="AY565665">
    <property type="protein sequence ID" value="AAS74675.1"/>
    <property type="molecule type" value="Genomic_DNA"/>
</dbReference>
<dbReference type="EMBL" id="AY565666">
    <property type="protein sequence ID" value="AAS74676.1"/>
    <property type="molecule type" value="Genomic_DNA"/>
</dbReference>
<dbReference type="EMBL" id="AY565667">
    <property type="protein sequence ID" value="AAS74677.1"/>
    <property type="molecule type" value="Genomic_DNA"/>
</dbReference>
<dbReference type="EMBL" id="AY565668">
    <property type="protein sequence ID" value="AAS74678.1"/>
    <property type="molecule type" value="Genomic_DNA"/>
</dbReference>
<dbReference type="EMBL" id="AY565669">
    <property type="protein sequence ID" value="AAS74679.1"/>
    <property type="molecule type" value="Genomic_DNA"/>
</dbReference>
<dbReference type="EMBL" id="AY565670">
    <property type="protein sequence ID" value="AAS74680.1"/>
    <property type="molecule type" value="Genomic_DNA"/>
</dbReference>
<dbReference type="EMBL" id="AY565671">
    <property type="protein sequence ID" value="AAS74681.1"/>
    <property type="molecule type" value="Genomic_DNA"/>
</dbReference>
<dbReference type="EMBL" id="AY565672">
    <property type="protein sequence ID" value="AAS74682.1"/>
    <property type="molecule type" value="Genomic_DNA"/>
</dbReference>
<dbReference type="EMBL" id="AY565673">
    <property type="protein sequence ID" value="AAS74683.1"/>
    <property type="molecule type" value="Genomic_DNA"/>
</dbReference>
<dbReference type="EMBL" id="AY565674">
    <property type="protein sequence ID" value="AAS74684.1"/>
    <property type="molecule type" value="Genomic_DNA"/>
</dbReference>
<dbReference type="EMBL" id="AY565675">
    <property type="protein sequence ID" value="AAS74685.1"/>
    <property type="molecule type" value="Genomic_DNA"/>
</dbReference>
<dbReference type="EMBL" id="AY565676">
    <property type="protein sequence ID" value="AAS74686.1"/>
    <property type="molecule type" value="Genomic_DNA"/>
</dbReference>
<dbReference type="EMBL" id="AY565677">
    <property type="protein sequence ID" value="AAS74687.1"/>
    <property type="molecule type" value="Genomic_DNA"/>
</dbReference>
<dbReference type="EMBL" id="AY565678">
    <property type="protein sequence ID" value="AAS74688.1"/>
    <property type="molecule type" value="Genomic_DNA"/>
</dbReference>
<dbReference type="EMBL" id="AY565679">
    <property type="protein sequence ID" value="AAS74689.1"/>
    <property type="molecule type" value="Genomic_DNA"/>
</dbReference>
<dbReference type="EMBL" id="AY565680">
    <property type="protein sequence ID" value="AAS74690.1"/>
    <property type="molecule type" value="Genomic_DNA"/>
</dbReference>
<dbReference type="EMBL" id="AY565681">
    <property type="protein sequence ID" value="AAS74691.1"/>
    <property type="molecule type" value="Genomic_DNA"/>
</dbReference>
<dbReference type="EMBL" id="AY565682">
    <property type="protein sequence ID" value="AAS74692.1"/>
    <property type="molecule type" value="Genomic_DNA"/>
</dbReference>
<dbReference type="EMBL" id="AY565683">
    <property type="protein sequence ID" value="AAS74693.1"/>
    <property type="molecule type" value="Genomic_DNA"/>
</dbReference>
<dbReference type="EMBL" id="AY565684">
    <property type="protein sequence ID" value="AAS74694.1"/>
    <property type="molecule type" value="Genomic_DNA"/>
</dbReference>
<dbReference type="EMBL" id="AY565685">
    <property type="protein sequence ID" value="AAS74695.1"/>
    <property type="molecule type" value="Genomic_DNA"/>
</dbReference>
<dbReference type="EMBL" id="AY565686">
    <property type="protein sequence ID" value="AAS74696.1"/>
    <property type="molecule type" value="Genomic_DNA"/>
</dbReference>
<dbReference type="EMBL" id="AY565687">
    <property type="protein sequence ID" value="AAS74697.1"/>
    <property type="molecule type" value="Genomic_DNA"/>
</dbReference>
<dbReference type="EMBL" id="AY565688">
    <property type="protein sequence ID" value="AAS74698.1"/>
    <property type="molecule type" value="Genomic_DNA"/>
</dbReference>
<dbReference type="EMBL" id="AY565689">
    <property type="protein sequence ID" value="AAS74699.1"/>
    <property type="molecule type" value="Genomic_DNA"/>
</dbReference>
<dbReference type="EMBL" id="AY565690">
    <property type="protein sequence ID" value="AAS74700.1"/>
    <property type="molecule type" value="Genomic_DNA"/>
</dbReference>
<dbReference type="EMBL" id="AY565691">
    <property type="protein sequence ID" value="AAS74701.1"/>
    <property type="molecule type" value="Genomic_DNA"/>
</dbReference>
<dbReference type="EMBL" id="AY565692">
    <property type="protein sequence ID" value="AAS74702.1"/>
    <property type="molecule type" value="Genomic_DNA"/>
</dbReference>
<dbReference type="EMBL" id="AY565693">
    <property type="protein sequence ID" value="AAS74703.1"/>
    <property type="molecule type" value="Genomic_DNA"/>
</dbReference>
<dbReference type="EMBL" id="AY565694">
    <property type="protein sequence ID" value="AAS74704.1"/>
    <property type="molecule type" value="Genomic_DNA"/>
</dbReference>
<dbReference type="EMBL" id="AY565695">
    <property type="protein sequence ID" value="AAS74705.1"/>
    <property type="molecule type" value="Genomic_DNA"/>
</dbReference>
<dbReference type="EMBL" id="AY565696">
    <property type="protein sequence ID" value="AAS74706.1"/>
    <property type="molecule type" value="Genomic_DNA"/>
</dbReference>
<dbReference type="EMBL" id="AY565697">
    <property type="protein sequence ID" value="AAS74707.1"/>
    <property type="molecule type" value="Genomic_DNA"/>
</dbReference>
<dbReference type="EMBL" id="AY565698">
    <property type="protein sequence ID" value="AAS74708.1"/>
    <property type="molecule type" value="Genomic_DNA"/>
</dbReference>
<dbReference type="EMBL" id="AY565699">
    <property type="protein sequence ID" value="AAS74709.1"/>
    <property type="molecule type" value="Genomic_DNA"/>
</dbReference>
<dbReference type="EMBL" id="AY565700">
    <property type="protein sequence ID" value="AAS74710.1"/>
    <property type="molecule type" value="Genomic_DNA"/>
</dbReference>
<dbReference type="EMBL" id="AY565701">
    <property type="protein sequence ID" value="AAS74711.1"/>
    <property type="molecule type" value="Genomic_DNA"/>
</dbReference>
<dbReference type="EMBL" id="AY565702">
    <property type="protein sequence ID" value="AAS74712.1"/>
    <property type="molecule type" value="Genomic_DNA"/>
</dbReference>
<dbReference type="EMBL" id="AY565703">
    <property type="protein sequence ID" value="AAS74713.1"/>
    <property type="status" value="ALT_SEQ"/>
    <property type="molecule type" value="Genomic_DNA"/>
</dbReference>
<dbReference type="EMBL" id="AY565704">
    <property type="protein sequence ID" value="AAS74714.1"/>
    <property type="molecule type" value="Genomic_DNA"/>
</dbReference>
<dbReference type="EMBL" id="AY565705">
    <property type="protein sequence ID" value="AAS74715.1"/>
    <property type="molecule type" value="Genomic_DNA"/>
</dbReference>
<dbReference type="EMBL" id="AY565706">
    <property type="protein sequence ID" value="AAS74716.1"/>
    <property type="molecule type" value="Genomic_DNA"/>
</dbReference>
<dbReference type="EMBL" id="AY565707">
    <property type="protein sequence ID" value="AAS74717.1"/>
    <property type="molecule type" value="Genomic_DNA"/>
</dbReference>
<dbReference type="EMBL" id="AY565708">
    <property type="protein sequence ID" value="AAS74718.1"/>
    <property type="molecule type" value="Genomic_DNA"/>
</dbReference>
<dbReference type="EMBL" id="AY565709">
    <property type="protein sequence ID" value="AAS74719.1"/>
    <property type="molecule type" value="Genomic_DNA"/>
</dbReference>
<dbReference type="EMBL" id="AY565710">
    <property type="protein sequence ID" value="AAS74720.1"/>
    <property type="molecule type" value="Genomic_DNA"/>
</dbReference>
<dbReference type="EMBL" id="AY565711">
    <property type="protein sequence ID" value="AAS74721.1"/>
    <property type="molecule type" value="Genomic_DNA"/>
</dbReference>
<dbReference type="EMBL" id="AY565712">
    <property type="protein sequence ID" value="AAS74722.1"/>
    <property type="molecule type" value="Genomic_DNA"/>
</dbReference>
<dbReference type="EMBL" id="AY565713">
    <property type="protein sequence ID" value="AAS74723.1"/>
    <property type="molecule type" value="Genomic_DNA"/>
</dbReference>
<dbReference type="EMBL" id="AY565714">
    <property type="protein sequence ID" value="AAS74724.1"/>
    <property type="molecule type" value="Genomic_DNA"/>
</dbReference>
<dbReference type="EMBL" id="AY565715">
    <property type="protein sequence ID" value="AAS74725.1"/>
    <property type="molecule type" value="Genomic_DNA"/>
</dbReference>
<dbReference type="EMBL" id="AY565716">
    <property type="protein sequence ID" value="AAS74726.1"/>
    <property type="molecule type" value="Genomic_DNA"/>
</dbReference>
<dbReference type="EMBL" id="AY565717">
    <property type="protein sequence ID" value="AAS74727.1"/>
    <property type="molecule type" value="Genomic_DNA"/>
</dbReference>
<dbReference type="EMBL" id="AY565718">
    <property type="protein sequence ID" value="AAS74728.1"/>
    <property type="molecule type" value="Genomic_DNA"/>
</dbReference>
<dbReference type="EMBL" id="AY565719">
    <property type="protein sequence ID" value="AAS74729.1"/>
    <property type="molecule type" value="Genomic_DNA"/>
</dbReference>
<dbReference type="EMBL" id="AY565720">
    <property type="protein sequence ID" value="AAS74730.1"/>
    <property type="molecule type" value="Genomic_DNA"/>
</dbReference>
<dbReference type="EMBL" id="AY565721">
    <property type="protein sequence ID" value="AAS74731.1"/>
    <property type="molecule type" value="Genomic_DNA"/>
</dbReference>
<dbReference type="EMBL" id="AY565722">
    <property type="protein sequence ID" value="AAS74732.1"/>
    <property type="molecule type" value="Genomic_DNA"/>
</dbReference>
<dbReference type="EMBL" id="AY565723">
    <property type="protein sequence ID" value="AAS74733.1"/>
    <property type="molecule type" value="Genomic_DNA"/>
</dbReference>
<dbReference type="EMBL" id="AY565724">
    <property type="protein sequence ID" value="AAS74734.1"/>
    <property type="molecule type" value="Genomic_DNA"/>
</dbReference>
<dbReference type="EMBL" id="AY565725">
    <property type="protein sequence ID" value="AAS74735.1"/>
    <property type="molecule type" value="Genomic_DNA"/>
</dbReference>
<dbReference type="EMBL" id="AY565726">
    <property type="protein sequence ID" value="AAS74736.1"/>
    <property type="molecule type" value="Genomic_DNA"/>
</dbReference>
<dbReference type="EMBL" id="AY565727">
    <property type="protein sequence ID" value="AAS74737.1"/>
    <property type="molecule type" value="Genomic_DNA"/>
</dbReference>
<dbReference type="EMBL" id="AY565728">
    <property type="protein sequence ID" value="AAS74738.1"/>
    <property type="molecule type" value="Genomic_DNA"/>
</dbReference>
<dbReference type="EMBL" id="AY565729">
    <property type="protein sequence ID" value="AAS74739.1"/>
    <property type="molecule type" value="Genomic_DNA"/>
</dbReference>
<dbReference type="EMBL" id="AY565730">
    <property type="protein sequence ID" value="AAS74740.1"/>
    <property type="molecule type" value="Genomic_DNA"/>
</dbReference>
<dbReference type="EMBL" id="AY565731">
    <property type="protein sequence ID" value="AAS74741.1"/>
    <property type="molecule type" value="Genomic_DNA"/>
</dbReference>
<dbReference type="EMBL" id="AY565732">
    <property type="protein sequence ID" value="AAS74742.1"/>
    <property type="molecule type" value="Genomic_DNA"/>
</dbReference>
<dbReference type="EMBL" id="AY565733">
    <property type="protein sequence ID" value="AAS74743.1"/>
    <property type="molecule type" value="Genomic_DNA"/>
</dbReference>
<dbReference type="EMBL" id="AY565734">
    <property type="protein sequence ID" value="AAS74744.1"/>
    <property type="molecule type" value="Genomic_DNA"/>
</dbReference>
<dbReference type="EMBL" id="AY565735">
    <property type="protein sequence ID" value="AAS74745.1"/>
    <property type="molecule type" value="Genomic_DNA"/>
</dbReference>
<dbReference type="EMBL" id="AY565736">
    <property type="protein sequence ID" value="AAS74746.1"/>
    <property type="molecule type" value="Genomic_DNA"/>
</dbReference>
<dbReference type="EMBL" id="AY565737">
    <property type="protein sequence ID" value="AAS74747.1"/>
    <property type="molecule type" value="Genomic_DNA"/>
</dbReference>
<dbReference type="EMBL" id="AY565738">
    <property type="protein sequence ID" value="AAS74748.1"/>
    <property type="molecule type" value="Genomic_DNA"/>
</dbReference>
<dbReference type="EMBL" id="AY565739">
    <property type="protein sequence ID" value="AAS74749.1"/>
    <property type="molecule type" value="Genomic_DNA"/>
</dbReference>
<dbReference type="EMBL" id="AY565740">
    <property type="protein sequence ID" value="AAS74750.1"/>
    <property type="molecule type" value="Genomic_DNA"/>
</dbReference>
<dbReference type="EMBL" id="AY565741">
    <property type="protein sequence ID" value="AAS74751.1"/>
    <property type="molecule type" value="Genomic_DNA"/>
</dbReference>
<dbReference type="EMBL" id="AY565742">
    <property type="protein sequence ID" value="AAS74752.1"/>
    <property type="molecule type" value="Genomic_DNA"/>
</dbReference>
<dbReference type="EMBL" id="AY565743">
    <property type="protein sequence ID" value="AAS74753.1"/>
    <property type="molecule type" value="Genomic_DNA"/>
</dbReference>
<dbReference type="EMBL" id="AY565744">
    <property type="protein sequence ID" value="AAS74754.1"/>
    <property type="molecule type" value="Genomic_DNA"/>
</dbReference>
<dbReference type="EMBL" id="AY565745">
    <property type="protein sequence ID" value="AAS74755.1"/>
    <property type="molecule type" value="Genomic_DNA"/>
</dbReference>
<dbReference type="EMBL" id="AY565746">
    <property type="protein sequence ID" value="AAS74756.1"/>
    <property type="molecule type" value="Genomic_DNA"/>
</dbReference>
<dbReference type="EMBL" id="AY565747">
    <property type="protein sequence ID" value="AAS74757.1"/>
    <property type="molecule type" value="Genomic_DNA"/>
</dbReference>
<dbReference type="EMBL" id="AY565748">
    <property type="protein sequence ID" value="AAS74758.1"/>
    <property type="molecule type" value="Genomic_DNA"/>
</dbReference>
<dbReference type="EMBL" id="AY565749">
    <property type="protein sequence ID" value="AAS74759.1"/>
    <property type="molecule type" value="Genomic_DNA"/>
</dbReference>
<dbReference type="EMBL" id="AY565750">
    <property type="protein sequence ID" value="AAS74760.1"/>
    <property type="molecule type" value="Genomic_DNA"/>
</dbReference>
<dbReference type="EMBL" id="AY565751">
    <property type="protein sequence ID" value="AAS74761.1"/>
    <property type="molecule type" value="Genomic_DNA"/>
</dbReference>
<dbReference type="EMBL" id="AY565752">
    <property type="protein sequence ID" value="AAS74762.1"/>
    <property type="molecule type" value="Genomic_DNA"/>
</dbReference>
<dbReference type="EMBL" id="AY565753">
    <property type="protein sequence ID" value="AAS74763.1"/>
    <property type="molecule type" value="Genomic_DNA"/>
</dbReference>
<dbReference type="EMBL" id="AY565754">
    <property type="protein sequence ID" value="AAS74764.1"/>
    <property type="molecule type" value="Genomic_DNA"/>
</dbReference>
<dbReference type="EMBL" id="AY565755">
    <property type="protein sequence ID" value="AAS74765.1"/>
    <property type="molecule type" value="Genomic_DNA"/>
</dbReference>
<dbReference type="EMBL" id="AY565756">
    <property type="protein sequence ID" value="AAS74766.1"/>
    <property type="molecule type" value="Genomic_DNA"/>
</dbReference>
<dbReference type="EMBL" id="AY565757">
    <property type="protein sequence ID" value="AAS74767.1"/>
    <property type="molecule type" value="Genomic_DNA"/>
</dbReference>
<dbReference type="EMBL" id="AY565758">
    <property type="protein sequence ID" value="AAS74768.1"/>
    <property type="molecule type" value="Genomic_DNA"/>
</dbReference>
<dbReference type="EMBL" id="AY565759">
    <property type="protein sequence ID" value="AAS74769.1"/>
    <property type="molecule type" value="Genomic_DNA"/>
</dbReference>
<dbReference type="EMBL" id="AY565760">
    <property type="protein sequence ID" value="AAS74770.1"/>
    <property type="molecule type" value="Genomic_DNA"/>
</dbReference>
<dbReference type="EMBL" id="AY565761">
    <property type="protein sequence ID" value="AAS74771.1"/>
    <property type="molecule type" value="Genomic_DNA"/>
</dbReference>
<dbReference type="EMBL" id="AY565762">
    <property type="protein sequence ID" value="AAS74772.1"/>
    <property type="molecule type" value="Genomic_DNA"/>
</dbReference>
<dbReference type="EMBL" id="AY565763">
    <property type="protein sequence ID" value="AAS74773.1"/>
    <property type="molecule type" value="Genomic_DNA"/>
</dbReference>
<dbReference type="EMBL" id="AY565764">
    <property type="protein sequence ID" value="AAS74774.1"/>
    <property type="molecule type" value="Genomic_DNA"/>
</dbReference>
<dbReference type="EMBL" id="AY565765">
    <property type="protein sequence ID" value="AAS74775.1"/>
    <property type="molecule type" value="Genomic_DNA"/>
</dbReference>
<dbReference type="EMBL" id="AY565766">
    <property type="protein sequence ID" value="AAS74776.1"/>
    <property type="molecule type" value="Genomic_DNA"/>
</dbReference>
<dbReference type="EMBL" id="AY565767">
    <property type="protein sequence ID" value="AAS74777.1"/>
    <property type="molecule type" value="Genomic_DNA"/>
</dbReference>
<dbReference type="EMBL" id="AY565768">
    <property type="protein sequence ID" value="AAS74778.1"/>
    <property type="molecule type" value="Genomic_DNA"/>
</dbReference>
<dbReference type="EMBL" id="AY565769">
    <property type="protein sequence ID" value="AAS74779.1"/>
    <property type="molecule type" value="Genomic_DNA"/>
</dbReference>
<dbReference type="EMBL" id="AY565770">
    <property type="protein sequence ID" value="AAS74780.1"/>
    <property type="molecule type" value="Genomic_DNA"/>
</dbReference>
<dbReference type="EMBL" id="AY565771">
    <property type="protein sequence ID" value="AAS74781.1"/>
    <property type="molecule type" value="Genomic_DNA"/>
</dbReference>
<dbReference type="EMBL" id="AY565772">
    <property type="protein sequence ID" value="AAS74782.1"/>
    <property type="molecule type" value="Genomic_DNA"/>
</dbReference>
<dbReference type="EMBL" id="AY565773">
    <property type="protein sequence ID" value="AAS74783.1"/>
    <property type="molecule type" value="Genomic_DNA"/>
</dbReference>
<dbReference type="EMBL" id="AY565774">
    <property type="protein sequence ID" value="AAS74784.1"/>
    <property type="molecule type" value="Genomic_DNA"/>
</dbReference>
<dbReference type="EMBL" id="AY565775">
    <property type="protein sequence ID" value="AAS74785.1"/>
    <property type="molecule type" value="Genomic_DNA"/>
</dbReference>
<dbReference type="EMBL" id="AY565776">
    <property type="protein sequence ID" value="AAS74786.1"/>
    <property type="molecule type" value="Genomic_DNA"/>
</dbReference>
<dbReference type="EMBL" id="AY565777">
    <property type="protein sequence ID" value="AAS74787.1"/>
    <property type="molecule type" value="Genomic_DNA"/>
</dbReference>
<dbReference type="EMBL" id="AY565778">
    <property type="protein sequence ID" value="AAS74788.1"/>
    <property type="molecule type" value="Genomic_DNA"/>
</dbReference>
<dbReference type="EMBL" id="AY565779">
    <property type="protein sequence ID" value="AAS74789.1"/>
    <property type="molecule type" value="Genomic_DNA"/>
</dbReference>
<dbReference type="EMBL" id="AY565780">
    <property type="protein sequence ID" value="AAS74790.1"/>
    <property type="molecule type" value="Genomic_DNA"/>
</dbReference>
<dbReference type="EMBL" id="AY565781">
    <property type="protein sequence ID" value="AAS74791.1"/>
    <property type="molecule type" value="Genomic_DNA"/>
</dbReference>
<dbReference type="EMBL" id="AY565782">
    <property type="protein sequence ID" value="AAS74792.1"/>
    <property type="molecule type" value="Genomic_DNA"/>
</dbReference>
<dbReference type="EMBL" id="AY565783">
    <property type="protein sequence ID" value="AAS74793.1"/>
    <property type="molecule type" value="Genomic_DNA"/>
</dbReference>
<dbReference type="EMBL" id="AY565784">
    <property type="protein sequence ID" value="AAS74794.1"/>
    <property type="molecule type" value="Genomic_DNA"/>
</dbReference>
<dbReference type="EMBL" id="AY565785">
    <property type="protein sequence ID" value="AAS74795.1"/>
    <property type="molecule type" value="Genomic_DNA"/>
</dbReference>
<dbReference type="EMBL" id="AY565786">
    <property type="protein sequence ID" value="AAS74796.1"/>
    <property type="molecule type" value="Genomic_DNA"/>
</dbReference>
<dbReference type="EMBL" id="AY565787">
    <property type="protein sequence ID" value="AAS74797.1"/>
    <property type="molecule type" value="Genomic_DNA"/>
</dbReference>
<dbReference type="EMBL" id="AY565788">
    <property type="protein sequence ID" value="AAS74798.1"/>
    <property type="molecule type" value="Genomic_DNA"/>
</dbReference>
<dbReference type="EMBL" id="AY565789">
    <property type="protein sequence ID" value="AAS74799.1"/>
    <property type="molecule type" value="Genomic_DNA"/>
</dbReference>
<dbReference type="EMBL" id="AY565790">
    <property type="protein sequence ID" value="AAS74800.1"/>
    <property type="molecule type" value="Genomic_DNA"/>
</dbReference>
<dbReference type="EMBL" id="AY565791">
    <property type="protein sequence ID" value="AAS74801.1"/>
    <property type="molecule type" value="Genomic_DNA"/>
</dbReference>
<dbReference type="EMBL" id="AY565792">
    <property type="protein sequence ID" value="AAS74802.1"/>
    <property type="molecule type" value="Genomic_DNA"/>
</dbReference>
<dbReference type="EMBL" id="AY565793">
    <property type="protein sequence ID" value="AAS74803.1"/>
    <property type="molecule type" value="Genomic_DNA"/>
</dbReference>
<dbReference type="EMBL" id="AY565794">
    <property type="protein sequence ID" value="AAS74804.1"/>
    <property type="molecule type" value="Genomic_DNA"/>
</dbReference>
<dbReference type="EMBL" id="AY565795">
    <property type="protein sequence ID" value="AAS74805.1"/>
    <property type="molecule type" value="Genomic_DNA"/>
</dbReference>
<dbReference type="EMBL" id="AY565796">
    <property type="protein sequence ID" value="AAS74806.1"/>
    <property type="molecule type" value="Genomic_DNA"/>
</dbReference>
<dbReference type="EMBL" id="AY565797">
    <property type="protein sequence ID" value="AAS74807.1"/>
    <property type="molecule type" value="Genomic_DNA"/>
</dbReference>
<dbReference type="EMBL" id="AY565798">
    <property type="protein sequence ID" value="AAS74808.1"/>
    <property type="molecule type" value="Genomic_DNA"/>
</dbReference>
<dbReference type="EMBL" id="AY565799">
    <property type="protein sequence ID" value="AAS74809.1"/>
    <property type="molecule type" value="Genomic_DNA"/>
</dbReference>
<dbReference type="EMBL" id="AY565800">
    <property type="protein sequence ID" value="AAS74810.1"/>
    <property type="molecule type" value="Genomic_DNA"/>
</dbReference>
<dbReference type="EMBL" id="AY565801">
    <property type="protein sequence ID" value="AAS74811.1"/>
    <property type="molecule type" value="Genomic_DNA"/>
</dbReference>
<dbReference type="EMBL" id="AY565802">
    <property type="protein sequence ID" value="AAS74812.1"/>
    <property type="molecule type" value="Genomic_DNA"/>
</dbReference>
<dbReference type="EMBL" id="AY565803">
    <property type="protein sequence ID" value="AAS74813.1"/>
    <property type="molecule type" value="Genomic_DNA"/>
</dbReference>
<dbReference type="EMBL" id="AY565804">
    <property type="protein sequence ID" value="AAS74814.1"/>
    <property type="molecule type" value="Genomic_DNA"/>
</dbReference>
<dbReference type="EMBL" id="AY565805">
    <property type="protein sequence ID" value="AAS74815.1"/>
    <property type="molecule type" value="Genomic_DNA"/>
</dbReference>
<dbReference type="EMBL" id="AY565806">
    <property type="protein sequence ID" value="AAS74816.1"/>
    <property type="molecule type" value="Genomic_DNA"/>
</dbReference>
<dbReference type="EMBL" id="AY565807">
    <property type="protein sequence ID" value="AAS74817.1"/>
    <property type="molecule type" value="Genomic_DNA"/>
</dbReference>
<dbReference type="EMBL" id="AY565808">
    <property type="protein sequence ID" value="AAS74818.1"/>
    <property type="molecule type" value="Genomic_DNA"/>
</dbReference>
<dbReference type="EMBL" id="AY565809">
    <property type="protein sequence ID" value="AAS74819.1"/>
    <property type="molecule type" value="Genomic_DNA"/>
</dbReference>
<dbReference type="EMBL" id="AY565810">
    <property type="protein sequence ID" value="AAS74820.1"/>
    <property type="molecule type" value="Genomic_DNA"/>
</dbReference>
<dbReference type="EMBL" id="AY565811">
    <property type="protein sequence ID" value="AAS74821.1"/>
    <property type="molecule type" value="Genomic_DNA"/>
</dbReference>
<dbReference type="EMBL" id="AY565812">
    <property type="protein sequence ID" value="AAS74822.1"/>
    <property type="molecule type" value="Genomic_DNA"/>
</dbReference>
<dbReference type="EMBL" id="AY565813">
    <property type="protein sequence ID" value="AAS74823.1"/>
    <property type="molecule type" value="Genomic_DNA"/>
</dbReference>
<dbReference type="EMBL" id="AY565814">
    <property type="protein sequence ID" value="AAS74824.1"/>
    <property type="molecule type" value="Genomic_DNA"/>
</dbReference>
<dbReference type="EMBL" id="AY565815">
    <property type="protein sequence ID" value="AAS74825.1"/>
    <property type="molecule type" value="Genomic_DNA"/>
</dbReference>
<dbReference type="EMBL" id="AY565816">
    <property type="protein sequence ID" value="AAS74826.1"/>
    <property type="molecule type" value="Genomic_DNA"/>
</dbReference>
<dbReference type="EMBL" id="AY565817">
    <property type="protein sequence ID" value="AAS74827.1"/>
    <property type="molecule type" value="Genomic_DNA"/>
</dbReference>
<dbReference type="EMBL" id="AY565818">
    <property type="protein sequence ID" value="AAS74828.1"/>
    <property type="molecule type" value="Genomic_DNA"/>
</dbReference>
<dbReference type="EMBL" id="AY565819">
    <property type="protein sequence ID" value="AAS74829.1"/>
    <property type="molecule type" value="Genomic_DNA"/>
</dbReference>
<dbReference type="EMBL" id="AY565820">
    <property type="protein sequence ID" value="AAS74830.1"/>
    <property type="molecule type" value="Genomic_DNA"/>
</dbReference>
<dbReference type="EMBL" id="AY565821">
    <property type="protein sequence ID" value="AAS74831.1"/>
    <property type="molecule type" value="Genomic_DNA"/>
</dbReference>
<dbReference type="EMBL" id="AY565822">
    <property type="protein sequence ID" value="AAS74832.1"/>
    <property type="molecule type" value="Genomic_DNA"/>
</dbReference>
<dbReference type="EMBL" id="AY565823">
    <property type="protein sequence ID" value="AAS74833.1"/>
    <property type="molecule type" value="Genomic_DNA"/>
</dbReference>
<dbReference type="EMBL" id="AY565824">
    <property type="protein sequence ID" value="AAS74834.1"/>
    <property type="molecule type" value="Genomic_DNA"/>
</dbReference>
<dbReference type="EMBL" id="AY565825">
    <property type="protein sequence ID" value="AAS74835.1"/>
    <property type="molecule type" value="Genomic_DNA"/>
</dbReference>
<dbReference type="EMBL" id="AY565826">
    <property type="protein sequence ID" value="AAS74836.1"/>
    <property type="molecule type" value="Genomic_DNA"/>
</dbReference>
<dbReference type="EMBL" id="AY565827">
    <property type="protein sequence ID" value="AAS74837.1"/>
    <property type="molecule type" value="Genomic_DNA"/>
</dbReference>
<dbReference type="EMBL" id="AY565828">
    <property type="protein sequence ID" value="AAS74838.1"/>
    <property type="molecule type" value="Genomic_DNA"/>
</dbReference>
<dbReference type="EMBL" id="AY565829">
    <property type="protein sequence ID" value="AAS74839.1"/>
    <property type="molecule type" value="Genomic_DNA"/>
</dbReference>
<dbReference type="EMBL" id="AY565830">
    <property type="protein sequence ID" value="AAS74840.1"/>
    <property type="molecule type" value="Genomic_DNA"/>
</dbReference>
<dbReference type="EMBL" id="AY565831">
    <property type="protein sequence ID" value="AAS74841.1"/>
    <property type="molecule type" value="Genomic_DNA"/>
</dbReference>
<dbReference type="EMBL" id="AY565832">
    <property type="protein sequence ID" value="AAS74842.1"/>
    <property type="molecule type" value="Genomic_DNA"/>
</dbReference>
<dbReference type="EMBL" id="AY565833">
    <property type="protein sequence ID" value="AAS74843.1"/>
    <property type="molecule type" value="Genomic_DNA"/>
</dbReference>
<dbReference type="EMBL" id="AY565834">
    <property type="protein sequence ID" value="AAS74844.1"/>
    <property type="molecule type" value="Genomic_DNA"/>
</dbReference>
<dbReference type="EMBL" id="AY565835">
    <property type="protein sequence ID" value="AAS74845.1"/>
    <property type="molecule type" value="Genomic_DNA"/>
</dbReference>
<dbReference type="EMBL" id="AY565836">
    <property type="protein sequence ID" value="AAS74846.1"/>
    <property type="molecule type" value="Genomic_DNA"/>
</dbReference>
<dbReference type="EMBL" id="AY565837">
    <property type="protein sequence ID" value="AAS74847.1"/>
    <property type="molecule type" value="Genomic_DNA"/>
</dbReference>
<dbReference type="EMBL" id="AY565838">
    <property type="protein sequence ID" value="AAS74848.1"/>
    <property type="molecule type" value="Genomic_DNA"/>
</dbReference>
<dbReference type="EMBL" id="AY565839">
    <property type="protein sequence ID" value="AAS74849.1"/>
    <property type="molecule type" value="Genomic_DNA"/>
</dbReference>
<dbReference type="EMBL" id="AY565840">
    <property type="protein sequence ID" value="AAS74850.1"/>
    <property type="molecule type" value="Genomic_DNA"/>
</dbReference>
<dbReference type="EMBL" id="AY565841">
    <property type="protein sequence ID" value="AAS74851.1"/>
    <property type="molecule type" value="Genomic_DNA"/>
</dbReference>
<dbReference type="EMBL" id="AY565842">
    <property type="protein sequence ID" value="AAS74852.1"/>
    <property type="molecule type" value="Genomic_DNA"/>
</dbReference>
<dbReference type="EMBL" id="AY565843">
    <property type="protein sequence ID" value="AAS74853.1"/>
    <property type="molecule type" value="Genomic_DNA"/>
</dbReference>
<dbReference type="EMBL" id="AY565844">
    <property type="protein sequence ID" value="AAS74854.1"/>
    <property type="molecule type" value="Genomic_DNA"/>
</dbReference>
<dbReference type="EMBL" id="AY565845">
    <property type="protein sequence ID" value="AAS74855.1"/>
    <property type="molecule type" value="Genomic_DNA"/>
</dbReference>
<dbReference type="EMBL" id="AY565846">
    <property type="protein sequence ID" value="AAS74856.1"/>
    <property type="molecule type" value="Genomic_DNA"/>
</dbReference>
<dbReference type="EMBL" id="AY565847">
    <property type="protein sequence ID" value="AAS74857.1"/>
    <property type="molecule type" value="Genomic_DNA"/>
</dbReference>
<dbReference type="EMBL" id="AY565848">
    <property type="protein sequence ID" value="AAS74858.1"/>
    <property type="molecule type" value="Genomic_DNA"/>
</dbReference>
<dbReference type="EMBL" id="AY565849">
    <property type="protein sequence ID" value="AAS74859.1"/>
    <property type="molecule type" value="Genomic_DNA"/>
</dbReference>
<dbReference type="EMBL" id="AY565850">
    <property type="protein sequence ID" value="AAS74860.1"/>
    <property type="molecule type" value="Genomic_DNA"/>
</dbReference>
<dbReference type="EMBL" id="AY565851">
    <property type="protein sequence ID" value="AAS74861.1"/>
    <property type="molecule type" value="Genomic_DNA"/>
</dbReference>
<dbReference type="EMBL" id="AY565852">
    <property type="protein sequence ID" value="AAS74862.1"/>
    <property type="molecule type" value="Genomic_DNA"/>
</dbReference>
<dbReference type="EMBL" id="AY565853">
    <property type="protein sequence ID" value="AAS74863.1"/>
    <property type="molecule type" value="Genomic_DNA"/>
</dbReference>
<dbReference type="EMBL" id="AY565854">
    <property type="protein sequence ID" value="AAS74864.1"/>
    <property type="molecule type" value="Genomic_DNA"/>
</dbReference>
<dbReference type="EMBL" id="AY565855">
    <property type="protein sequence ID" value="AAS74865.1"/>
    <property type="molecule type" value="Genomic_DNA"/>
</dbReference>
<dbReference type="EMBL" id="AY565856">
    <property type="protein sequence ID" value="AAS74866.1"/>
    <property type="molecule type" value="Genomic_DNA"/>
</dbReference>
<dbReference type="EMBL" id="AY565857">
    <property type="protein sequence ID" value="AAS74867.1"/>
    <property type="molecule type" value="Genomic_DNA"/>
</dbReference>
<dbReference type="EMBL" id="AY565858">
    <property type="protein sequence ID" value="AAS74868.1"/>
    <property type="molecule type" value="Genomic_DNA"/>
</dbReference>
<dbReference type="EMBL" id="AY565859">
    <property type="protein sequence ID" value="AAS74869.1"/>
    <property type="molecule type" value="Genomic_DNA"/>
</dbReference>
<dbReference type="EMBL" id="AY565860">
    <property type="protein sequence ID" value="AAS74870.1"/>
    <property type="molecule type" value="Genomic_DNA"/>
</dbReference>
<dbReference type="EMBL" id="AY565861">
    <property type="protein sequence ID" value="AAS74871.1"/>
    <property type="molecule type" value="Genomic_DNA"/>
</dbReference>
<dbReference type="EMBL" id="AY565862">
    <property type="protein sequence ID" value="AAS74872.1"/>
    <property type="molecule type" value="Genomic_DNA"/>
</dbReference>
<dbReference type="EMBL" id="AY565863">
    <property type="protein sequence ID" value="AAS74873.1"/>
    <property type="molecule type" value="Genomic_DNA"/>
</dbReference>
<dbReference type="EMBL" id="AY565864">
    <property type="protein sequence ID" value="AAS74874.1"/>
    <property type="molecule type" value="Genomic_DNA"/>
</dbReference>
<dbReference type="EMBL" id="AY565865">
    <property type="protein sequence ID" value="AAS74875.1"/>
    <property type="molecule type" value="Genomic_DNA"/>
</dbReference>
<dbReference type="EMBL" id="AY565866">
    <property type="protein sequence ID" value="AAS74876.1"/>
    <property type="molecule type" value="Genomic_DNA"/>
</dbReference>
<dbReference type="EMBL" id="AY565867">
    <property type="protein sequence ID" value="AAS74877.1"/>
    <property type="molecule type" value="Genomic_DNA"/>
</dbReference>
<dbReference type="EMBL" id="AY565868">
    <property type="protein sequence ID" value="AAS74878.1"/>
    <property type="molecule type" value="Genomic_DNA"/>
</dbReference>
<dbReference type="EMBL" id="AY565869">
    <property type="protein sequence ID" value="AAS74879.1"/>
    <property type="molecule type" value="Genomic_DNA"/>
</dbReference>
<dbReference type="EMBL" id="AY565870">
    <property type="protein sequence ID" value="AAS74880.1"/>
    <property type="molecule type" value="Genomic_DNA"/>
</dbReference>
<dbReference type="EMBL" id="AY565871">
    <property type="protein sequence ID" value="AAS74881.1"/>
    <property type="molecule type" value="Genomic_DNA"/>
</dbReference>
<dbReference type="EMBL" id="AY565872">
    <property type="protein sequence ID" value="AAS74882.1"/>
    <property type="molecule type" value="Genomic_DNA"/>
</dbReference>
<dbReference type="EMBL" id="AY565873">
    <property type="protein sequence ID" value="AAS74883.1"/>
    <property type="molecule type" value="Genomic_DNA"/>
</dbReference>
<dbReference type="EMBL" id="AY565874">
    <property type="protein sequence ID" value="AAS74884.1"/>
    <property type="molecule type" value="Genomic_DNA"/>
</dbReference>
<dbReference type="EMBL" id="AY565875">
    <property type="protein sequence ID" value="AAS74885.1"/>
    <property type="molecule type" value="Genomic_DNA"/>
</dbReference>
<dbReference type="EMBL" id="AY565876">
    <property type="protein sequence ID" value="AAS74886.1"/>
    <property type="molecule type" value="Genomic_DNA"/>
</dbReference>
<dbReference type="EMBL" id="AY565877">
    <property type="protein sequence ID" value="AAS74887.1"/>
    <property type="molecule type" value="Genomic_DNA"/>
</dbReference>
<dbReference type="EMBL" id="AY565878">
    <property type="protein sequence ID" value="AAS74888.1"/>
    <property type="molecule type" value="Genomic_DNA"/>
</dbReference>
<dbReference type="EMBL" id="AY565879">
    <property type="protein sequence ID" value="AAS74889.1"/>
    <property type="molecule type" value="Genomic_DNA"/>
</dbReference>
<dbReference type="EMBL" id="AY565880">
    <property type="protein sequence ID" value="AAS74890.1"/>
    <property type="molecule type" value="Genomic_DNA"/>
</dbReference>
<dbReference type="EMBL" id="AY565881">
    <property type="protein sequence ID" value="AAS74891.1"/>
    <property type="molecule type" value="Genomic_DNA"/>
</dbReference>
<dbReference type="EMBL" id="AY565882">
    <property type="protein sequence ID" value="AAS74892.1"/>
    <property type="molecule type" value="Genomic_DNA"/>
</dbReference>
<dbReference type="EMBL" id="AY565883">
    <property type="protein sequence ID" value="AAS74893.1"/>
    <property type="molecule type" value="Genomic_DNA"/>
</dbReference>
<dbReference type="EMBL" id="AY565884">
    <property type="protein sequence ID" value="AAS74894.1"/>
    <property type="molecule type" value="Genomic_DNA"/>
</dbReference>
<dbReference type="EMBL" id="AY565885">
    <property type="protein sequence ID" value="AAS74895.1"/>
    <property type="molecule type" value="Genomic_DNA"/>
</dbReference>
<dbReference type="EMBL" id="AY565886">
    <property type="protein sequence ID" value="AAS74896.1"/>
    <property type="molecule type" value="Genomic_DNA"/>
</dbReference>
<dbReference type="EMBL" id="AY565887">
    <property type="protein sequence ID" value="AAS74897.1"/>
    <property type="molecule type" value="Genomic_DNA"/>
</dbReference>
<dbReference type="EMBL" id="AY565888">
    <property type="protein sequence ID" value="AAS74898.1"/>
    <property type="molecule type" value="Genomic_DNA"/>
</dbReference>
<dbReference type="EMBL" id="AY565889">
    <property type="protein sequence ID" value="AAS74899.1"/>
    <property type="molecule type" value="Genomic_DNA"/>
</dbReference>
<dbReference type="EMBL" id="AY565890">
    <property type="protein sequence ID" value="AAS74900.1"/>
    <property type="molecule type" value="Genomic_DNA"/>
</dbReference>
<dbReference type="EMBL" id="AY565891">
    <property type="protein sequence ID" value="AAS74901.1"/>
    <property type="molecule type" value="Genomic_DNA"/>
</dbReference>
<dbReference type="EMBL" id="AY565892">
    <property type="protein sequence ID" value="AAS74902.1"/>
    <property type="molecule type" value="Genomic_DNA"/>
</dbReference>
<dbReference type="EMBL" id="AY565893">
    <property type="protein sequence ID" value="AAS74903.1"/>
    <property type="molecule type" value="Genomic_DNA"/>
</dbReference>
<dbReference type="EMBL" id="AY565894">
    <property type="protein sequence ID" value="AAS74904.1"/>
    <property type="molecule type" value="Genomic_DNA"/>
</dbReference>
<dbReference type="EMBL" id="AY565895">
    <property type="protein sequence ID" value="AAS74905.1"/>
    <property type="molecule type" value="Genomic_DNA"/>
</dbReference>
<dbReference type="EMBL" id="AY565896">
    <property type="protein sequence ID" value="AAS74906.1"/>
    <property type="molecule type" value="Genomic_DNA"/>
</dbReference>
<dbReference type="EMBL" id="AY565897">
    <property type="protein sequence ID" value="AAS74907.1"/>
    <property type="molecule type" value="Genomic_DNA"/>
</dbReference>
<dbReference type="EMBL" id="AY565898">
    <property type="protein sequence ID" value="AAS74908.1"/>
    <property type="molecule type" value="Genomic_DNA"/>
</dbReference>
<dbReference type="EMBL" id="AY565899">
    <property type="protein sequence ID" value="AAS74909.1"/>
    <property type="molecule type" value="Genomic_DNA"/>
</dbReference>
<dbReference type="EMBL" id="AY565900">
    <property type="protein sequence ID" value="AAS74910.1"/>
    <property type="molecule type" value="Genomic_DNA"/>
</dbReference>
<dbReference type="EMBL" id="AY565901">
    <property type="protein sequence ID" value="AAS74911.1"/>
    <property type="molecule type" value="Genomic_DNA"/>
</dbReference>
<dbReference type="EMBL" id="AY565902">
    <property type="protein sequence ID" value="AAS74912.1"/>
    <property type="molecule type" value="Genomic_DNA"/>
</dbReference>
<dbReference type="EMBL" id="AY565903">
    <property type="protein sequence ID" value="AAS74913.1"/>
    <property type="molecule type" value="Genomic_DNA"/>
</dbReference>
<dbReference type="EMBL" id="AY565904">
    <property type="protein sequence ID" value="AAS74914.1"/>
    <property type="molecule type" value="Genomic_DNA"/>
</dbReference>
<dbReference type="EMBL" id="AY565905">
    <property type="protein sequence ID" value="AAS74915.1"/>
    <property type="molecule type" value="Genomic_DNA"/>
</dbReference>
<dbReference type="EMBL" id="AY565906">
    <property type="protein sequence ID" value="AAS74916.1"/>
    <property type="molecule type" value="Genomic_DNA"/>
</dbReference>
<dbReference type="EMBL" id="AY565907">
    <property type="protein sequence ID" value="AAS74917.1"/>
    <property type="molecule type" value="Genomic_DNA"/>
</dbReference>
<dbReference type="EMBL" id="AY565908">
    <property type="protein sequence ID" value="AAS74918.1"/>
    <property type="molecule type" value="Genomic_DNA"/>
</dbReference>
<dbReference type="EMBL" id="AY565909">
    <property type="protein sequence ID" value="AAS74919.1"/>
    <property type="molecule type" value="Genomic_DNA"/>
</dbReference>
<dbReference type="EMBL" id="AY565910">
    <property type="protein sequence ID" value="AAS74920.1"/>
    <property type="molecule type" value="Genomic_DNA"/>
</dbReference>
<dbReference type="EMBL" id="AY565911">
    <property type="protein sequence ID" value="AAS74921.1"/>
    <property type="molecule type" value="Genomic_DNA"/>
</dbReference>
<dbReference type="EMBL" id="AY565912">
    <property type="protein sequence ID" value="AAS74922.1"/>
    <property type="molecule type" value="Genomic_DNA"/>
</dbReference>
<dbReference type="EMBL" id="AY565913">
    <property type="protein sequence ID" value="AAS74923.1"/>
    <property type="molecule type" value="Genomic_DNA"/>
</dbReference>
<dbReference type="EMBL" id="AY565914">
    <property type="protein sequence ID" value="AAS74924.1"/>
    <property type="molecule type" value="Genomic_DNA"/>
</dbReference>
<dbReference type="EMBL" id="AY565915">
    <property type="protein sequence ID" value="AAS74925.1"/>
    <property type="molecule type" value="Genomic_DNA"/>
</dbReference>
<dbReference type="EMBL" id="AY565916">
    <property type="protein sequence ID" value="AAS74926.1"/>
    <property type="molecule type" value="Genomic_DNA"/>
</dbReference>
<dbReference type="EMBL" id="AY565917">
    <property type="protein sequence ID" value="AAS74927.1"/>
    <property type="molecule type" value="Genomic_DNA"/>
</dbReference>
<dbReference type="EMBL" id="AY565918">
    <property type="protein sequence ID" value="AAS74928.1"/>
    <property type="molecule type" value="Genomic_DNA"/>
</dbReference>
<dbReference type="EMBL" id="AY565919">
    <property type="protein sequence ID" value="AAS74929.1"/>
    <property type="molecule type" value="Genomic_DNA"/>
</dbReference>
<dbReference type="EMBL" id="AY565920">
    <property type="protein sequence ID" value="AAS74930.1"/>
    <property type="molecule type" value="Genomic_DNA"/>
</dbReference>
<dbReference type="EMBL" id="AY565921">
    <property type="protein sequence ID" value="AAS74931.1"/>
    <property type="molecule type" value="Genomic_DNA"/>
</dbReference>
<dbReference type="EMBL" id="AY565922">
    <property type="protein sequence ID" value="AAS74932.1"/>
    <property type="molecule type" value="Genomic_DNA"/>
</dbReference>
<dbReference type="EMBL" id="AY565923">
    <property type="protein sequence ID" value="AAS74933.1"/>
    <property type="molecule type" value="Genomic_DNA"/>
</dbReference>
<dbReference type="EMBL" id="AY565924">
    <property type="protein sequence ID" value="AAS74934.1"/>
    <property type="molecule type" value="Genomic_DNA"/>
</dbReference>
<dbReference type="EMBL" id="AY565925">
    <property type="protein sequence ID" value="AAS74935.1"/>
    <property type="molecule type" value="Genomic_DNA"/>
</dbReference>
<dbReference type="EMBL" id="AY565926">
    <property type="protein sequence ID" value="AAS74936.1"/>
    <property type="molecule type" value="Genomic_DNA"/>
</dbReference>
<dbReference type="EMBL" id="AY565927">
    <property type="protein sequence ID" value="AAS74937.1"/>
    <property type="molecule type" value="Genomic_DNA"/>
</dbReference>
<dbReference type="EMBL" id="AY565928">
    <property type="protein sequence ID" value="AAS74938.1"/>
    <property type="molecule type" value="Genomic_DNA"/>
</dbReference>
<dbReference type="EMBL" id="AY565929">
    <property type="protein sequence ID" value="AAS74939.1"/>
    <property type="molecule type" value="Genomic_DNA"/>
</dbReference>
<dbReference type="EMBL" id="AY565930">
    <property type="protein sequence ID" value="AAS74940.1"/>
    <property type="molecule type" value="Genomic_DNA"/>
</dbReference>
<dbReference type="EMBL" id="AY565931">
    <property type="protein sequence ID" value="AAS74941.1"/>
    <property type="molecule type" value="Genomic_DNA"/>
</dbReference>
<dbReference type="EMBL" id="AY565932">
    <property type="protein sequence ID" value="AAS74942.1"/>
    <property type="molecule type" value="Genomic_DNA"/>
</dbReference>
<dbReference type="EMBL" id="AY565933">
    <property type="protein sequence ID" value="AAS74943.1"/>
    <property type="molecule type" value="Genomic_DNA"/>
</dbReference>
<dbReference type="EMBL" id="AY565934">
    <property type="protein sequence ID" value="AAS74944.1"/>
    <property type="molecule type" value="Genomic_DNA"/>
</dbReference>
<dbReference type="EMBL" id="AY565935">
    <property type="protein sequence ID" value="AAS74945.1"/>
    <property type="molecule type" value="Genomic_DNA"/>
</dbReference>
<dbReference type="EMBL" id="AY565936">
    <property type="protein sequence ID" value="AAS74946.1"/>
    <property type="molecule type" value="Genomic_DNA"/>
</dbReference>
<dbReference type="EMBL" id="AY565937">
    <property type="protein sequence ID" value="AAS74947.1"/>
    <property type="molecule type" value="Genomic_DNA"/>
</dbReference>
<dbReference type="EMBL" id="AY565938">
    <property type="protein sequence ID" value="AAS74948.1"/>
    <property type="molecule type" value="Genomic_DNA"/>
</dbReference>
<dbReference type="EMBL" id="AY565939">
    <property type="protein sequence ID" value="AAS74949.1"/>
    <property type="molecule type" value="Genomic_DNA"/>
</dbReference>
<dbReference type="EMBL" id="AY565940">
    <property type="protein sequence ID" value="AAS74950.1"/>
    <property type="molecule type" value="Genomic_DNA"/>
</dbReference>
<dbReference type="EMBL" id="AY565941">
    <property type="protein sequence ID" value="AAS74951.1"/>
    <property type="molecule type" value="Genomic_DNA"/>
</dbReference>
<dbReference type="EMBL" id="AY565942">
    <property type="protein sequence ID" value="AAS74952.1"/>
    <property type="molecule type" value="Genomic_DNA"/>
</dbReference>
<dbReference type="EMBL" id="AY565943">
    <property type="protein sequence ID" value="AAS74953.1"/>
    <property type="molecule type" value="Genomic_DNA"/>
</dbReference>
<dbReference type="EMBL" id="AY565944">
    <property type="protein sequence ID" value="AAS74954.1"/>
    <property type="molecule type" value="Genomic_DNA"/>
</dbReference>
<dbReference type="EMBL" id="AY565945">
    <property type="protein sequence ID" value="AAS74955.1"/>
    <property type="molecule type" value="Genomic_DNA"/>
</dbReference>
<dbReference type="EMBL" id="AY565946">
    <property type="protein sequence ID" value="AAS74956.1"/>
    <property type="molecule type" value="Genomic_DNA"/>
</dbReference>
<dbReference type="EMBL" id="AY565947">
    <property type="protein sequence ID" value="AAS74957.1"/>
    <property type="molecule type" value="Genomic_DNA"/>
</dbReference>
<dbReference type="EMBL" id="AY565948">
    <property type="protein sequence ID" value="AAS74958.1"/>
    <property type="molecule type" value="Genomic_DNA"/>
</dbReference>
<dbReference type="EMBL" id="AY565949">
    <property type="protein sequence ID" value="AAS74959.1"/>
    <property type="molecule type" value="Genomic_DNA"/>
</dbReference>
<dbReference type="PIR" id="S19156">
    <property type="entry name" value="S19156"/>
</dbReference>
<dbReference type="RefSeq" id="NP_001137708.2">
    <property type="nucleotide sequence ID" value="NM_001144236.2"/>
</dbReference>
<dbReference type="RefSeq" id="NP_523789.3">
    <property type="nucleotide sequence ID" value="NM_079065.6"/>
</dbReference>
<dbReference type="SMR" id="P28286"/>
<dbReference type="BioGRID" id="62857">
    <property type="interactions" value="2"/>
</dbReference>
<dbReference type="FunCoup" id="P28286">
    <property type="interactions" value="171"/>
</dbReference>
<dbReference type="STRING" id="7227.FBpp0303089"/>
<dbReference type="GlyCosmos" id="P28286">
    <property type="glycosylation" value="4 sites, No reported glycans"/>
</dbReference>
<dbReference type="GlyGen" id="P28286">
    <property type="glycosylation" value="4 sites"/>
</dbReference>
<dbReference type="PaxDb" id="7227-FBpp0085783"/>
<dbReference type="DNASU" id="37191"/>
<dbReference type="EnsemblMetazoa" id="FBtr0086599">
    <property type="protein sequence ID" value="FBpp0085783"/>
    <property type="gene ID" value="FBgn0263116"/>
</dbReference>
<dbReference type="GeneID" id="37191"/>
<dbReference type="KEGG" id="dme:Dmel_CG15113"/>
<dbReference type="AGR" id="FB:FBgn0263116"/>
<dbReference type="CTD" id="37191"/>
<dbReference type="FlyBase" id="FBgn0263116">
    <property type="gene designation" value="5-HT1B"/>
</dbReference>
<dbReference type="VEuPathDB" id="VectorBase:FBgn0263116"/>
<dbReference type="eggNOG" id="KOG3656">
    <property type="taxonomic scope" value="Eukaryota"/>
</dbReference>
<dbReference type="GeneTree" id="ENSGT01010000222287"/>
<dbReference type="InParanoid" id="P28286"/>
<dbReference type="OMA" id="CEIHPAV"/>
<dbReference type="OrthoDB" id="10034726at2759"/>
<dbReference type="PhylomeDB" id="P28286"/>
<dbReference type="Reactome" id="R-DME-390650">
    <property type="pathway name" value="Histamine receptors"/>
</dbReference>
<dbReference type="Reactome" id="R-DME-390651">
    <property type="pathway name" value="Dopamine receptors"/>
</dbReference>
<dbReference type="Reactome" id="R-DME-390666">
    <property type="pathway name" value="Serotonin receptors"/>
</dbReference>
<dbReference type="Reactome" id="R-DME-418555">
    <property type="pathway name" value="G alpha (s) signalling events"/>
</dbReference>
<dbReference type="Reactome" id="R-DME-418594">
    <property type="pathway name" value="G alpha (i) signalling events"/>
</dbReference>
<dbReference type="BioGRID-ORCS" id="37191">
    <property type="hits" value="0 hits in 3 CRISPR screens"/>
</dbReference>
<dbReference type="ChiTaRS" id="5-HT1B">
    <property type="organism name" value="fly"/>
</dbReference>
<dbReference type="GenomeRNAi" id="37191"/>
<dbReference type="PRO" id="PR:P28286"/>
<dbReference type="Proteomes" id="UP000000803">
    <property type="component" value="Chromosome 2R"/>
</dbReference>
<dbReference type="Bgee" id="FBgn0263116">
    <property type="expression patterns" value="Expressed in columnar neuron T1 (Drosophila) in insect head and 82 other cell types or tissues"/>
</dbReference>
<dbReference type="ExpressionAtlas" id="P28286">
    <property type="expression patterns" value="baseline and differential"/>
</dbReference>
<dbReference type="GO" id="GO:0030425">
    <property type="term" value="C:dendrite"/>
    <property type="evidence" value="ECO:0000318"/>
    <property type="project" value="GO_Central"/>
</dbReference>
<dbReference type="GO" id="GO:0016020">
    <property type="term" value="C:membrane"/>
    <property type="evidence" value="ECO:0000250"/>
    <property type="project" value="FlyBase"/>
</dbReference>
<dbReference type="GO" id="GO:0005886">
    <property type="term" value="C:plasma membrane"/>
    <property type="evidence" value="ECO:0000318"/>
    <property type="project" value="GO_Central"/>
</dbReference>
<dbReference type="GO" id="GO:0045202">
    <property type="term" value="C:synapse"/>
    <property type="evidence" value="ECO:0007669"/>
    <property type="project" value="GOC"/>
</dbReference>
<dbReference type="GO" id="GO:0008227">
    <property type="term" value="F:G protein-coupled amine receptor activity"/>
    <property type="evidence" value="ECO:0000250"/>
    <property type="project" value="FlyBase"/>
</dbReference>
<dbReference type="GO" id="GO:0004993">
    <property type="term" value="F:G protein-coupled serotonin receptor activity"/>
    <property type="evidence" value="ECO:0000314"/>
    <property type="project" value="FlyBase"/>
</dbReference>
<dbReference type="GO" id="GO:0001586">
    <property type="term" value="F:Gi/o-coupled serotonin receptor activity"/>
    <property type="evidence" value="ECO:0000303"/>
    <property type="project" value="FlyBase"/>
</dbReference>
<dbReference type="GO" id="GO:0030594">
    <property type="term" value="F:neurotransmitter receptor activity"/>
    <property type="evidence" value="ECO:0000318"/>
    <property type="project" value="GO_Central"/>
</dbReference>
<dbReference type="GO" id="GO:0007198">
    <property type="term" value="P:adenylate cyclase-inhibiting serotonin receptor signaling pathway"/>
    <property type="evidence" value="ECO:0000314"/>
    <property type="project" value="FlyBase"/>
</dbReference>
<dbReference type="GO" id="GO:0007268">
    <property type="term" value="P:chemical synaptic transmission"/>
    <property type="evidence" value="ECO:0000318"/>
    <property type="project" value="GO_Central"/>
</dbReference>
<dbReference type="GO" id="GO:0009649">
    <property type="term" value="P:entrainment of circadian clock"/>
    <property type="evidence" value="ECO:0000315"/>
    <property type="project" value="FlyBase"/>
</dbReference>
<dbReference type="GO" id="GO:0007187">
    <property type="term" value="P:G protein-coupled receptor signaling pathway, coupled to cyclic nucleotide second messenger"/>
    <property type="evidence" value="ECO:0000318"/>
    <property type="project" value="GO_Central"/>
</dbReference>
<dbReference type="GO" id="GO:0007208">
    <property type="term" value="P:phospholipase C-activating serotonin receptor signaling pathway"/>
    <property type="evidence" value="ECO:0000314"/>
    <property type="project" value="FlyBase"/>
</dbReference>
<dbReference type="GO" id="GO:0007210">
    <property type="term" value="P:serotonin receptor signaling pathway"/>
    <property type="evidence" value="ECO:0000314"/>
    <property type="project" value="FlyBase"/>
</dbReference>
<dbReference type="CDD" id="cd15331">
    <property type="entry name" value="7tmA_5-HT1A_invertebrates"/>
    <property type="match status" value="1"/>
</dbReference>
<dbReference type="FunFam" id="1.20.1070.10:FF:000299">
    <property type="entry name" value="5-hydroxytryptamine receptor 2B"/>
    <property type="match status" value="1"/>
</dbReference>
<dbReference type="FunFam" id="1.20.1070.10:FF:000310">
    <property type="entry name" value="5-hydroxytryptamine receptor 2B"/>
    <property type="match status" value="1"/>
</dbReference>
<dbReference type="Gene3D" id="1.20.1070.10">
    <property type="entry name" value="Rhodopsin 7-helix transmembrane proteins"/>
    <property type="match status" value="2"/>
</dbReference>
<dbReference type="InterPro" id="IPR000276">
    <property type="entry name" value="GPCR_Rhodpsn"/>
</dbReference>
<dbReference type="InterPro" id="IPR017452">
    <property type="entry name" value="GPCR_Rhodpsn_7TM"/>
</dbReference>
<dbReference type="PANTHER" id="PTHR24248">
    <property type="entry name" value="ADRENERGIC RECEPTOR-RELATED G-PROTEIN COUPLED RECEPTOR"/>
    <property type="match status" value="1"/>
</dbReference>
<dbReference type="PANTHER" id="PTHR24248:SF199">
    <property type="entry name" value="IP13425P-RELATED"/>
    <property type="match status" value="1"/>
</dbReference>
<dbReference type="Pfam" id="PF00001">
    <property type="entry name" value="7tm_1"/>
    <property type="match status" value="1"/>
</dbReference>
<dbReference type="PRINTS" id="PR00237">
    <property type="entry name" value="GPCRRHODOPSN"/>
</dbReference>
<dbReference type="SMART" id="SM01381">
    <property type="entry name" value="7TM_GPCR_Srsx"/>
    <property type="match status" value="1"/>
</dbReference>
<dbReference type="SUPFAM" id="SSF81321">
    <property type="entry name" value="Family A G protein-coupled receptor-like"/>
    <property type="match status" value="1"/>
</dbReference>
<dbReference type="PROSITE" id="PS00237">
    <property type="entry name" value="G_PROTEIN_RECEP_F1_1"/>
    <property type="match status" value="1"/>
</dbReference>
<dbReference type="PROSITE" id="PS50262">
    <property type="entry name" value="G_PROTEIN_RECEP_F1_2"/>
    <property type="match status" value="1"/>
</dbReference>
<organism>
    <name type="scientific">Drosophila melanogaster</name>
    <name type="common">Fruit fly</name>
    <dbReference type="NCBI Taxonomy" id="7227"/>
    <lineage>
        <taxon>Eukaryota</taxon>
        <taxon>Metazoa</taxon>
        <taxon>Ecdysozoa</taxon>
        <taxon>Arthropoda</taxon>
        <taxon>Hexapoda</taxon>
        <taxon>Insecta</taxon>
        <taxon>Pterygota</taxon>
        <taxon>Neoptera</taxon>
        <taxon>Endopterygota</taxon>
        <taxon>Diptera</taxon>
        <taxon>Brachycera</taxon>
        <taxon>Muscomorpha</taxon>
        <taxon>Ephydroidea</taxon>
        <taxon>Drosophilidae</taxon>
        <taxon>Drosophila</taxon>
        <taxon>Sophophora</taxon>
    </lineage>
</organism>
<feature type="chain" id="PRO_0000068963" description="5-hydroxytryptamine receptor 2B">
    <location>
        <begin position="1"/>
        <end position="617"/>
    </location>
</feature>
<feature type="topological domain" description="Extracellular" evidence="1">
    <location>
        <begin position="1"/>
        <end position="95"/>
    </location>
</feature>
<feature type="transmembrane region" description="Helical; Name=1" evidence="1">
    <location>
        <begin position="96"/>
        <end position="116"/>
    </location>
</feature>
<feature type="topological domain" description="Cytoplasmic" evidence="1">
    <location>
        <begin position="117"/>
        <end position="128"/>
    </location>
</feature>
<feature type="transmembrane region" description="Helical; Name=2" evidence="1">
    <location>
        <begin position="129"/>
        <end position="149"/>
    </location>
</feature>
<feature type="topological domain" description="Extracellular" evidence="1">
    <location>
        <begin position="150"/>
        <end position="164"/>
    </location>
</feature>
<feature type="transmembrane region" description="Helical; Name=3" evidence="1">
    <location>
        <begin position="165"/>
        <end position="185"/>
    </location>
</feature>
<feature type="topological domain" description="Cytoplasmic" evidence="1">
    <location>
        <begin position="186"/>
        <end position="205"/>
    </location>
</feature>
<feature type="transmembrane region" description="Helical; Name=4" evidence="1">
    <location>
        <begin position="206"/>
        <end position="226"/>
    </location>
</feature>
<feature type="topological domain" description="Extracellular" evidence="1">
    <location>
        <begin position="227"/>
        <end position="256"/>
    </location>
</feature>
<feature type="transmembrane region" description="Helical; Name=5" evidence="1">
    <location>
        <begin position="257"/>
        <end position="277"/>
    </location>
</feature>
<feature type="topological domain" description="Cytoplasmic" evidence="1">
    <location>
        <begin position="278"/>
        <end position="534"/>
    </location>
</feature>
<feature type="transmembrane region" description="Helical; Name=6" evidence="1">
    <location>
        <begin position="535"/>
        <end position="555"/>
    </location>
</feature>
<feature type="topological domain" description="Extracellular" evidence="1">
    <location>
        <begin position="556"/>
        <end position="570"/>
    </location>
</feature>
<feature type="transmembrane region" description="Helical; Name=7" evidence="1">
    <location>
        <begin position="571"/>
        <end position="591"/>
    </location>
</feature>
<feature type="topological domain" description="Cytoplasmic" evidence="1">
    <location>
        <begin position="592"/>
        <end position="617"/>
    </location>
</feature>
<feature type="region of interest" description="Disordered" evidence="4">
    <location>
        <begin position="309"/>
        <end position="336"/>
    </location>
</feature>
<feature type="compositionally biased region" description="Basic and acidic residues" evidence="4">
    <location>
        <begin position="317"/>
        <end position="327"/>
    </location>
</feature>
<feature type="glycosylation site" description="N-linked (GlcNAc...) asparagine" evidence="2">
    <location>
        <position position="31"/>
    </location>
</feature>
<feature type="glycosylation site" description="N-linked (GlcNAc...) asparagine" evidence="2">
    <location>
        <position position="41"/>
    </location>
</feature>
<feature type="glycosylation site" description="N-linked (GlcNAc...) asparagine" evidence="2">
    <location>
        <position position="51"/>
    </location>
</feature>
<feature type="glycosylation site" description="N-linked (GlcNAc...) asparagine" evidence="2">
    <location>
        <position position="58"/>
    </location>
</feature>
<feature type="disulfide bond" evidence="3">
    <location>
        <begin position="163"/>
        <end position="242"/>
    </location>
</feature>
<feature type="sequence variant" description="In strain: NC-100." evidence="6">
    <original>D</original>
    <variation>V</variation>
    <location>
        <position position="14"/>
    </location>
</feature>
<feature type="sequence variant" description="In strain: CA-128, NC-005, NC-114 and NC-115." evidence="6">
    <original>G</original>
    <variation>R</variation>
    <location>
        <position position="40"/>
    </location>
</feature>
<feature type="sequence variant" description="In strain: CA-001, CA-002, CA-003, CA-008, CA-009, CA-010, CA-011, CA-012, CA-015, CA-017, CA-018, CA-023, CA-026, CA-027, CA-030, CA-034, CA-035, CA-037, CA-040, CA-041, CA-043, CA-044, CA-046, CA-047, CA-048, CA-052, CA-055, CA-056, CA-057, CA-058, CA-060, CA-061, CA-062, CA-063, CA-064, CA-065, CA-066, CA-068, CA-069, CA-070, CA-072, CA-075, CA-081, CA-086, CA-087, CA-088, CA-090, CA-091, CA-093, CA-095, CA-105, CA-113, CA-114, CA-120, CA-126, CA-128, CA-129, CA-130, CA-132, CA-133, CA-136, CA-137, CA-140, CA-142, CA-144, CA-145, CA-147, Oregon-R, NC-001, NC-002, NC-003, NC-004, NC-005, NC-006, NC-008, NC-010, NC-011, NC-012, NC-014, NC-015, NC-017, NC-021, NC-022, NC-023, NC-025, NC-026, NC-027, NC-028, NC-029, NC-030, NC-032, NC-033, NC-034, NC-036, NC-040, NC-041, NC-042, NC-043, NC-044, NC-046, NC-047, NC-048, NC-049, NC-051, NC-052, NC-053, NC-054, NC-057, NC-058, NC-059, NC-060, NC-062, NC-064, NC-066, NC-067, NC-068, NC-069, NC-071, NC-072, NC-073, NC-074, NC-075, NC-077, NC-079, NC-080, NC-081, NC-084, NC-086, NC-087, NC-089, NC-091, NC-092, NC-094, NC-095, NC-096, NC-097, NC-098, NC-100, NC-101, NC-103, NC-104, NC-105, NC-107, NC-108, NC-110, NC-112, NC-113, NC-114, NC-115, NC-116, NC-118, NC-119, NC-121, NC-123, NC-124, NC-126, NC-127, NC-128, NC-129, NC-131, NC-134, NC-135, NC-136, NC-137, NC-138, NC-139, NC-141, NC-142, NC-144, NC-146, NC-147, NC-149 and NC-148." evidence="5 6">
    <original>I</original>
    <variation>V</variation>
    <location>
        <position position="61"/>
    </location>
</feature>
<feature type="sequence variant" description="In strain: CA-027." evidence="6">
    <original>E</original>
    <variation>K</variation>
    <location>
        <position position="76"/>
    </location>
</feature>
<feature type="sequence variant" description="In strain: NC-037, NC-038, NC-039 and NC-109." evidence="6">
    <original>R</original>
    <variation>W</variation>
    <location>
        <position position="79"/>
    </location>
</feature>
<feature type="sequence variant" description="In strain: NC-053." evidence="6">
    <original>M</original>
    <variation>I</variation>
    <location>
        <position position="90"/>
    </location>
</feature>
<feature type="sequence variant" description="In strain: NC-026 and NC-027." evidence="6">
    <original>A</original>
    <variation>E</variation>
    <location>
        <position position="301"/>
    </location>
</feature>
<feature type="sequence variant" description="In strain: CA-017, CA-061, CA-062, CA-093, CA-132, CA-018, CA-027, CA-070, CA-075, CA-081, CA-086, CA-096, CA-100, CA-105, CA-126, CA-128, CA-130, CA-137, CA-142, CA-145, NC-024, NC-048, NC-071, NC-104, NC-005, NC-008, NC-018, NC-025, NC-028, NC-043, NC-046, NC-049, NC-054, NC-058, NC-070, NC-077, NC-095, NC-098, NC-101, NC-103, NC-114, NC-115, NC-119, NC-136 and NC-141." evidence="6">
    <original>R</original>
    <variation>H</variation>
    <location>
        <position position="309"/>
    </location>
</feature>
<feature type="sequence variant" description="In strain: CA-003, CA-035, CA-062, CA-066, CA-081, CA-091, CA-126, CA-145, CA-010, CA-015, CA-017, CA-018, CA-023, CA-027, CA-030, CA-061, CA-064, CA-070, CA-072, CA-075, CA-086, CA-090, CA-093, CA-095, CA-096, CA-100, CA-105, CA-114, CA-128, CA-130, CA-132, CA-137, CA-142, NC-010, NC-022, NC-028, NC-036, NC-037, NC-054, NC-068, NC-092, NC-095, NC-108, NC-100, NC-111, NC-119, NC-125, NC-142, NC-001, NC-003, NC-005, NC-006, NC-008, NC-012, NC-014, NC-017, NC-018, NC-021, NC-023, NC-024, NC-025, NC-026, NC-027, NC-032, NC-038, NC-039, NC-043, NC-046, NC-048, NC-049, NC-053, NC-058, NC-059, NC-069, NC-070, NC-071, NC-073, NC-077, NC-084, NC-089, NC-094, NC-096, NC-097, NC-098, NC-101, NC-103, NC-104, NC-105, NC-107, NC-114, NC-115, NC-118, NC-121, NC-123, NC-124, NC-126, NC-127, NC-131, NC-136, NC-139, NC-141, NC-146 and NC-149." evidence="6">
    <original>S</original>
    <variation>G</variation>
    <location>
        <position position="310"/>
    </location>
</feature>
<feature type="sequence variant" description="In strain: CA-040, CA-055 and CA-098." evidence="6">
    <original>T</original>
    <variation>I</variation>
    <location>
        <position position="460"/>
    </location>
</feature>
<feature type="sequence variant" description="In strain: NC-003 and NC-142." evidence="6">
    <original>T</original>
    <variation>S</variation>
    <location>
        <position position="463"/>
    </location>
</feature>
<feature type="sequence variant" description="In strain: CA-064, NC-096 and NC-108." evidence="6">
    <location>
        <begin position="478"/>
        <end position="481"/>
    </location>
</feature>
<feature type="sequence variant" description="In strain: CA-064, NC-015, NC-096, NC-108, NC-128, NC-135 and NC-137." evidence="6">
    <original>A</original>
    <variation>V</variation>
    <location>
        <position position="492"/>
    </location>
</feature>
<feature type="sequence conflict" description="In Ref. 1; CAA77571." evidence="7" ref="1">
    <original>T</original>
    <variation>M</variation>
    <location>
        <position position="332"/>
    </location>
</feature>
<feature type="sequence conflict" description="In Ref. 1; CAA77571." evidence="7" ref="1">
    <original>L</original>
    <variation>V</variation>
    <location>
        <position position="424"/>
    </location>
</feature>